<evidence type="ECO:0000250" key="1">
    <source>
        <dbReference type="UniProtKB" id="Q9CAJ0"/>
    </source>
</evidence>
<evidence type="ECO:0000255" key="2">
    <source>
        <dbReference type="PROSITE-ProRule" id="PRU01082"/>
    </source>
</evidence>
<evidence type="ECO:0000269" key="3">
    <source>
    </source>
</evidence>
<evidence type="ECO:0000269" key="4">
    <source>
    </source>
</evidence>
<evidence type="ECO:0000269" key="5">
    <source>
    </source>
</evidence>
<evidence type="ECO:0000269" key="6">
    <source>
    </source>
</evidence>
<evidence type="ECO:0000269" key="7">
    <source>
    </source>
</evidence>
<evidence type="ECO:0000269" key="8">
    <source>
    </source>
</evidence>
<evidence type="ECO:0000269" key="9">
    <source>
    </source>
</evidence>
<evidence type="ECO:0000269" key="10">
    <source>
    </source>
</evidence>
<evidence type="ECO:0000269" key="11">
    <source>
    </source>
</evidence>
<evidence type="ECO:0000269" key="12">
    <source>
    </source>
</evidence>
<evidence type="ECO:0000269" key="13">
    <source>
    </source>
</evidence>
<evidence type="ECO:0000269" key="14">
    <source>
    </source>
</evidence>
<evidence type="ECO:0000269" key="15">
    <source>
    </source>
</evidence>
<evidence type="ECO:0000269" key="16">
    <source>
    </source>
</evidence>
<evidence type="ECO:0000269" key="17">
    <source>
    </source>
</evidence>
<evidence type="ECO:0000269" key="18">
    <source>
    </source>
</evidence>
<evidence type="ECO:0000269" key="19">
    <source>
    </source>
</evidence>
<evidence type="ECO:0000269" key="20">
    <source>
    </source>
</evidence>
<evidence type="ECO:0000269" key="21">
    <source>
    </source>
</evidence>
<evidence type="ECO:0000269" key="22">
    <source>
    </source>
</evidence>
<evidence type="ECO:0000269" key="23">
    <source>
    </source>
</evidence>
<evidence type="ECO:0000269" key="24">
    <source>
    </source>
</evidence>
<evidence type="ECO:0000269" key="25">
    <source>
    </source>
</evidence>
<evidence type="ECO:0000269" key="26">
    <source>
    </source>
</evidence>
<evidence type="ECO:0000269" key="27">
    <source>
    </source>
</evidence>
<evidence type="ECO:0000269" key="28">
    <source>
    </source>
</evidence>
<evidence type="ECO:0000269" key="29">
    <source>
    </source>
</evidence>
<evidence type="ECO:0000269" key="30">
    <source>
    </source>
</evidence>
<evidence type="ECO:0000269" key="31">
    <source>
    </source>
</evidence>
<evidence type="ECO:0000269" key="32">
    <source>
    </source>
</evidence>
<evidence type="ECO:0000269" key="33">
    <source>
    </source>
</evidence>
<evidence type="ECO:0000269" key="34">
    <source>
    </source>
</evidence>
<evidence type="ECO:0000269" key="35">
    <source>
    </source>
</evidence>
<evidence type="ECO:0000269" key="36">
    <source>
    </source>
</evidence>
<evidence type="ECO:0000269" key="37">
    <source>
    </source>
</evidence>
<evidence type="ECO:0000269" key="38">
    <source>
    </source>
</evidence>
<evidence type="ECO:0000269" key="39">
    <source>
    </source>
</evidence>
<evidence type="ECO:0000269" key="40">
    <source>
    </source>
</evidence>
<evidence type="ECO:0000269" key="41">
    <source>
    </source>
</evidence>
<evidence type="ECO:0000269" key="42">
    <source>
    </source>
</evidence>
<evidence type="ECO:0000269" key="43">
    <source>
    </source>
</evidence>
<evidence type="ECO:0000269" key="44">
    <source>
    </source>
</evidence>
<evidence type="ECO:0000269" key="45">
    <source>
    </source>
</evidence>
<evidence type="ECO:0000269" key="46">
    <source>
    </source>
</evidence>
<evidence type="ECO:0000269" key="47">
    <source>
    </source>
</evidence>
<evidence type="ECO:0000269" key="48">
    <source>
    </source>
</evidence>
<evidence type="ECO:0000269" key="49">
    <source>
    </source>
</evidence>
<evidence type="ECO:0000269" key="50">
    <source>
    </source>
</evidence>
<evidence type="ECO:0000269" key="51">
    <source>
    </source>
</evidence>
<evidence type="ECO:0000269" key="52">
    <source>
    </source>
</evidence>
<evidence type="ECO:0000269" key="53">
    <source>
    </source>
</evidence>
<evidence type="ECO:0000269" key="54">
    <source>
    </source>
</evidence>
<evidence type="ECO:0000269" key="55">
    <source>
    </source>
</evidence>
<evidence type="ECO:0000269" key="56">
    <source>
    </source>
</evidence>
<evidence type="ECO:0000269" key="57">
    <source>
    </source>
</evidence>
<evidence type="ECO:0000269" key="58">
    <source>
    </source>
</evidence>
<evidence type="ECO:0000269" key="59">
    <source>
    </source>
</evidence>
<evidence type="ECO:0000269" key="60">
    <source>
    </source>
</evidence>
<evidence type="ECO:0000269" key="61">
    <source>
    </source>
</evidence>
<evidence type="ECO:0000269" key="62">
    <source>
    </source>
</evidence>
<evidence type="ECO:0000269" key="63">
    <source>
    </source>
</evidence>
<evidence type="ECO:0000269" key="64">
    <source>
    </source>
</evidence>
<evidence type="ECO:0000269" key="65">
    <source>
    </source>
</evidence>
<evidence type="ECO:0000269" key="66">
    <source>
    </source>
</evidence>
<evidence type="ECO:0000269" key="67">
    <source>
    </source>
</evidence>
<evidence type="ECO:0000269" key="68">
    <source>
    </source>
</evidence>
<evidence type="ECO:0000269" key="69">
    <source>
    </source>
</evidence>
<evidence type="ECO:0000269" key="70">
    <source>
    </source>
</evidence>
<evidence type="ECO:0000269" key="71">
    <source>
    </source>
</evidence>
<evidence type="ECO:0000269" key="72">
    <source>
    </source>
</evidence>
<evidence type="ECO:0000269" key="73">
    <source>
    </source>
</evidence>
<evidence type="ECO:0000269" key="74">
    <source ref="8"/>
</evidence>
<evidence type="ECO:0000303" key="75">
    <source>
    </source>
</evidence>
<evidence type="ECO:0000303" key="76">
    <source>
    </source>
</evidence>
<evidence type="ECO:0000305" key="77"/>
<evidence type="ECO:0000312" key="78">
    <source>
        <dbReference type="Araport" id="AT4G26080"/>
    </source>
</evidence>
<evidence type="ECO:0000312" key="79">
    <source>
        <dbReference type="EMBL" id="CAB39673.1"/>
    </source>
</evidence>
<evidence type="ECO:0007744" key="80">
    <source>
        <dbReference type="PDB" id="3NMN"/>
    </source>
</evidence>
<evidence type="ECO:0007829" key="81">
    <source>
        <dbReference type="PDB" id="3JRQ"/>
    </source>
</evidence>
<evidence type="ECO:0007829" key="82">
    <source>
        <dbReference type="PDB" id="3KDJ"/>
    </source>
</evidence>
<feature type="chain" id="PRO_0000057766" description="Protein phosphatase 2C 56">
    <location>
        <begin position="1"/>
        <end position="434"/>
    </location>
</feature>
<feature type="domain" description="PPM-type phosphatase" evidence="2">
    <location>
        <begin position="128"/>
        <end position="422"/>
    </location>
</feature>
<feature type="short sequence motif" description="Nuclear localization signal" evidence="42">
    <location>
        <begin position="423"/>
        <end position="427"/>
    </location>
</feature>
<feature type="binding site" evidence="80">
    <location>
        <position position="177"/>
    </location>
    <ligand>
        <name>Mg(2+)</name>
        <dbReference type="ChEBI" id="CHEBI:18420"/>
        <label>1</label>
    </ligand>
</feature>
<feature type="binding site" evidence="80">
    <location>
        <position position="177"/>
    </location>
    <ligand>
        <name>Mg(2+)</name>
        <dbReference type="ChEBI" id="CHEBI:18420"/>
        <label>2</label>
    </ligand>
</feature>
<feature type="binding site" evidence="80">
    <location>
        <position position="261"/>
    </location>
    <ligand>
        <name>Mg(2+)</name>
        <dbReference type="ChEBI" id="CHEBI:18420"/>
        <label>1</label>
    </ligand>
</feature>
<feature type="binding site" evidence="80">
    <location>
        <position position="262"/>
    </location>
    <ligand>
        <name>Mg(2+)</name>
        <dbReference type="ChEBI" id="CHEBI:18420"/>
        <label>1</label>
    </ligand>
</feature>
<feature type="binding site" evidence="80">
    <location>
        <position position="347"/>
    </location>
    <ligand>
        <name>Mg(2+)</name>
        <dbReference type="ChEBI" id="CHEBI:18420"/>
        <label>1</label>
    </ligand>
</feature>
<feature type="binding site" evidence="80">
    <location>
        <position position="347"/>
    </location>
    <ligand>
        <name>Mg(2+)</name>
        <dbReference type="ChEBI" id="CHEBI:18420"/>
        <label>2</label>
    </ligand>
</feature>
<feature type="binding site" evidence="80">
    <location>
        <position position="413"/>
    </location>
    <ligand>
        <name>Mg(2+)</name>
        <dbReference type="ChEBI" id="CHEBI:18420"/>
        <label>2</label>
    </ligand>
</feature>
<feature type="site" description="Lock" evidence="1">
    <location>
        <position position="300"/>
    </location>
</feature>
<feature type="mutagenesis site" description="Normal binding with PA, no reduction of phosphatase activity." evidence="27">
    <original>RK</original>
    <variation>GA</variation>
    <location>
        <begin position="67"/>
        <end position="68"/>
    </location>
</feature>
<feature type="mutagenesis site" description="Loss of binding with PA, no reduction of phosphatase activity." evidence="27 34">
    <original>R</original>
    <variation>A</variation>
    <location>
        <position position="73"/>
    </location>
</feature>
<feature type="mutagenesis site" description="No phenotype." evidence="72">
    <original>D</original>
    <variation>A</variation>
    <location>
        <position position="93"/>
    </location>
</feature>
<feature type="mutagenesis site" description="Reduced inhibition of the ABA signaling pathway and loss of phosphatase activity." evidence="72">
    <original>MED</original>
    <variation>IHG</variation>
    <location>
        <begin position="141"/>
        <end position="143"/>
    </location>
</feature>
<feature type="mutagenesis site" description="Reduced binding affinity for PYL1, and impaired phosphatase activity." evidence="47">
    <original>E</original>
    <variation>A</variation>
    <location>
        <position position="142"/>
    </location>
</feature>
<feature type="mutagenesis site" description="No inhibition of the ABA signaling pathway and loss of phosphatase activity." evidence="72">
    <original>G</original>
    <variation>D</variation>
    <location>
        <position position="174"/>
    </location>
</feature>
<feature type="mutagenesis site" description="No inhibition of the ABA signaling pathway and loss of phosphatase activity." evidence="72">
    <original>DGH</original>
    <variation>KLN</variation>
    <location>
        <begin position="177"/>
        <end position="179"/>
    </location>
</feature>
<feature type="mutagenesis site" description="Loss of phosphatase activity, impaired negative regulation of the ABA signaling pathway, reduced interaction with ATHB-6, and reduced negative control on fibrillin expression." evidence="15 33 42">
    <original>D</original>
    <variation>A</variation>
    <location>
        <position position="177"/>
    </location>
</feature>
<feature type="mutagenesis site" description="In abi1; wilty phenotype, reduced phosphatase activity, ABA-insensitive seed germination and growth, impaired ABA-mediated binding to PYR1, and reduced interaction with ATHB-6. Increased sensitivity to ABA and loss of phosphatase activity; when associated with T-185, or Y-259, or C-304, or D-307, or F-314, or L-328, or N-316. No inhibition of the ABA signaling pathway and loss of phosphatase activity; when associated with D-174." evidence="4 15 42 44 61 64 72 73">
    <original>G</original>
    <variation>D</variation>
    <location>
        <position position="180"/>
    </location>
</feature>
<feature type="mutagenesis site" description="Increased sensitivity to ABA and loss of phosphatase activity; when associated with D-180." evidence="4">
    <original>A</original>
    <variation>T</variation>
    <location>
        <position position="185"/>
    </location>
</feature>
<feature type="mutagenesis site" description="Normal affinity for PYL1." evidence="47">
    <original>T</original>
    <variation>A</variation>
    <location>
        <position position="239"/>
    </location>
</feature>
<feature type="mutagenesis site" description="Increased sensitivity to ABA and loss of phosphatase activity; when associated with D-180." evidence="4">
    <original>C</original>
    <variation>Y</variation>
    <location>
        <position position="259"/>
    </location>
</feature>
<feature type="mutagenesis site" description="Loss of affinity for PYL1." evidence="47">
    <original>I</original>
    <variation>A</variation>
    <location>
        <position position="298"/>
    </location>
</feature>
<feature type="mutagenesis site" description="Loss of affinity for PYL1." evidence="47">
    <original>W</original>
    <variation>A</variation>
    <location>
        <position position="300"/>
    </location>
</feature>
<feature type="mutagenesis site" description="Loss of affinity for PYL1." evidence="4 47">
    <original>R</original>
    <variation>A</variation>
    <location>
        <position position="304"/>
    </location>
</feature>
<feature type="mutagenesis site" description="Increased sensitivity to ABA and loss of phosphatase activity; when associated with D-180." evidence="4 47">
    <original>R</original>
    <variation>C</variation>
    <location>
        <position position="304"/>
    </location>
</feature>
<feature type="mutagenesis site" description="Reduced affinity for PYL1." evidence="47">
    <original>F</original>
    <variation>A</variation>
    <location>
        <position position="306"/>
    </location>
</feature>
<feature type="mutagenesis site" description="Increased sensitivity to ABA and loss of phosphatase activity; when associated with D-180." evidence="4">
    <original>G</original>
    <variation>D</variation>
    <location>
        <position position="307"/>
    </location>
</feature>
<feature type="mutagenesis site" description="Reduced affinity for PYL1." evidence="47">
    <original>V</original>
    <variation>A</variation>
    <location>
        <position position="308"/>
    </location>
</feature>
<feature type="mutagenesis site" description="Increased sensitivity to ABA and loss of phosphatase activity; when associated with D-180." evidence="4">
    <original>S</original>
    <variation>F</variation>
    <location>
        <position position="314"/>
    </location>
</feature>
<feature type="mutagenesis site" description="Reduced affinity for PYL1." evidence="47">
    <original>Y</original>
    <variation>A</variation>
    <location>
        <position position="319"/>
    </location>
</feature>
<feature type="mutagenesis site" description="Increased sensitivity to ABA and loss of phosphatase activity; when associated with D-180." evidence="4">
    <original>P</original>
    <variation>L</variation>
    <location>
        <position position="328"/>
    </location>
</feature>
<feature type="mutagenesis site" description="Increased sensitivity to ABA and loss of phosphatase activity; when associated with D-180." evidence="4">
    <original>S</original>
    <variation>N</variation>
    <location>
        <position position="416"/>
    </location>
</feature>
<feature type="mutagenesis site" description="Cytoplasmic subcellular localization, and loss of negative regulation of the ABA signaling pathway." evidence="42">
    <original>RRK</original>
    <variation>QNN</variation>
    <location>
        <begin position="425"/>
        <end position="427"/>
    </location>
</feature>
<feature type="sequence conflict" description="In Ref. 6; AAK59578." evidence="77" ref="6">
    <original>G</original>
    <variation>R</variation>
    <location>
        <position position="24"/>
    </location>
</feature>
<feature type="sequence conflict" description="In Ref. 3; CAA55484." evidence="77" ref="3">
    <original>I</original>
    <variation>V</variation>
    <location>
        <position position="105"/>
    </location>
</feature>
<feature type="strand" evidence="82">
    <location>
        <begin position="129"/>
        <end position="134"/>
    </location>
</feature>
<feature type="strand" evidence="82">
    <location>
        <begin position="138"/>
        <end position="140"/>
    </location>
</feature>
<feature type="strand" evidence="82">
    <location>
        <begin position="143"/>
        <end position="148"/>
    </location>
</feature>
<feature type="turn" evidence="81">
    <location>
        <begin position="149"/>
        <end position="152"/>
    </location>
</feature>
<feature type="helix" evidence="82">
    <location>
        <begin position="166"/>
        <end position="169"/>
    </location>
</feature>
<feature type="strand" evidence="82">
    <location>
        <begin position="171"/>
        <end position="182"/>
    </location>
</feature>
<feature type="helix" evidence="82">
    <location>
        <begin position="183"/>
        <end position="203"/>
    </location>
</feature>
<feature type="helix" evidence="82">
    <location>
        <begin position="207"/>
        <end position="210"/>
    </location>
</feature>
<feature type="helix" evidence="82">
    <location>
        <begin position="211"/>
        <end position="231"/>
    </location>
</feature>
<feature type="helix" evidence="82">
    <location>
        <begin position="232"/>
        <end position="234"/>
    </location>
</feature>
<feature type="strand" evidence="82">
    <location>
        <begin position="244"/>
        <end position="249"/>
    </location>
</feature>
<feature type="strand" evidence="82">
    <location>
        <begin position="251"/>
        <end position="261"/>
    </location>
</feature>
<feature type="strand" evidence="82">
    <location>
        <begin position="263"/>
        <end position="268"/>
    </location>
</feature>
<feature type="strand" evidence="82">
    <location>
        <begin position="271"/>
        <end position="275"/>
    </location>
</feature>
<feature type="helix" evidence="82">
    <location>
        <begin position="284"/>
        <end position="292"/>
    </location>
</feature>
<feature type="strand" evidence="82">
    <location>
        <begin position="297"/>
        <end position="305"/>
    </location>
</feature>
<feature type="turn" evidence="82">
    <location>
        <begin position="306"/>
        <end position="308"/>
    </location>
</feature>
<feature type="helix" evidence="82">
    <location>
        <begin position="318"/>
        <end position="320"/>
    </location>
</feature>
<feature type="turn" evidence="82">
    <location>
        <begin position="321"/>
        <end position="323"/>
    </location>
</feature>
<feature type="strand" evidence="82">
    <location>
        <begin position="329"/>
        <end position="334"/>
    </location>
</feature>
<feature type="strand" evidence="82">
    <location>
        <begin position="339"/>
        <end position="345"/>
    </location>
</feature>
<feature type="helix" evidence="82">
    <location>
        <begin position="347"/>
        <end position="350"/>
    </location>
</feature>
<feature type="helix" evidence="82">
    <location>
        <begin position="355"/>
        <end position="369"/>
    </location>
</feature>
<feature type="helix" evidence="82">
    <location>
        <begin position="393"/>
        <end position="408"/>
    </location>
</feature>
<feature type="strand" evidence="82">
    <location>
        <begin position="415"/>
        <end position="421"/>
    </location>
</feature>
<keyword id="KW-0002">3D-structure</keyword>
<keyword id="KW-0938">Abscisic acid signaling pathway</keyword>
<keyword id="KW-1003">Cell membrane</keyword>
<keyword id="KW-0963">Cytoplasm</keyword>
<keyword id="KW-0378">Hydrolase</keyword>
<keyword id="KW-0460">Magnesium</keyword>
<keyword id="KW-0464">Manganese</keyword>
<keyword id="KW-0472">Membrane</keyword>
<keyword id="KW-0479">Metal-binding</keyword>
<keyword id="KW-0539">Nucleus</keyword>
<keyword id="KW-0904">Protein phosphatase</keyword>
<keyword id="KW-1185">Reference proteome</keyword>
<gene>
    <name evidence="76" type="primary">ABI1</name>
    <name evidence="78" type="ordered locus">At4g26080</name>
    <name evidence="79" type="ORF">F20B18.190</name>
</gene>
<accession>P49597</accession>
<accession>Q0WW30</accession>
<accession>Q43717</accession>
<accession>Q94C87</accession>
<organism>
    <name type="scientific">Arabidopsis thaliana</name>
    <name type="common">Mouse-ear cress</name>
    <dbReference type="NCBI Taxonomy" id="3702"/>
    <lineage>
        <taxon>Eukaryota</taxon>
        <taxon>Viridiplantae</taxon>
        <taxon>Streptophyta</taxon>
        <taxon>Embryophyta</taxon>
        <taxon>Tracheophyta</taxon>
        <taxon>Spermatophyta</taxon>
        <taxon>Magnoliopsida</taxon>
        <taxon>eudicotyledons</taxon>
        <taxon>Gunneridae</taxon>
        <taxon>Pentapetalae</taxon>
        <taxon>rosids</taxon>
        <taxon>malvids</taxon>
        <taxon>Brassicales</taxon>
        <taxon>Brassicaceae</taxon>
        <taxon>Camelineae</taxon>
        <taxon>Arabidopsis</taxon>
    </lineage>
</organism>
<reference key="1">
    <citation type="journal article" date="1994" name="Cell">
        <title>The A. thaliana disease resistance gene RPS2 encodes a protein containing a nucleotide-binding site and leucine-rich repeats.</title>
        <authorList>
            <person name="Mindrinos M."/>
            <person name="Katagiri F."/>
            <person name="Yu G.-L."/>
            <person name="Ausubel F.M."/>
        </authorList>
    </citation>
    <scope>NUCLEOTIDE SEQUENCE [MRNA]</scope>
    <source>
        <strain>cv. Columbia</strain>
        <tissue>Leaf</tissue>
    </source>
</reference>
<reference key="2">
    <citation type="journal article" date="1994" name="Science">
        <title>Arabidopsis ABA response gene ABI1: features of a calcium-modulated protein phosphatase.</title>
        <authorList>
            <person name="Leung J."/>
            <person name="Bouvier-Durand M."/>
            <person name="Morris P.C."/>
            <person name="Guerrier D."/>
            <person name="Chefdor F."/>
            <person name="Giraudat J."/>
        </authorList>
    </citation>
    <scope>NUCLEOTIDE SEQUENCE [MRNA]</scope>
    <source>
        <strain>cv. Columbia</strain>
        <tissue>Leaf</tissue>
    </source>
</reference>
<reference key="3">
    <citation type="journal article" date="1994" name="Science">
        <title>A protein phosphatase 2C involved in ABA signal transduction in Arabidopsis thaliana.</title>
        <authorList>
            <person name="Meyer K."/>
            <person name="Leube M.P."/>
            <person name="Grill E."/>
        </authorList>
    </citation>
    <scope>NUCLEOTIDE SEQUENCE [GENOMIC DNA]</scope>
    <scope>MUTAGENESIS OF GLY-180</scope>
    <source>
        <strain>cv. Landsberg erecta</strain>
    </source>
</reference>
<reference key="4">
    <citation type="journal article" date="1999" name="Nature">
        <title>Sequence and analysis of chromosome 4 of the plant Arabidopsis thaliana.</title>
        <authorList>
            <person name="Mayer K.F.X."/>
            <person name="Schueller C."/>
            <person name="Wambutt R."/>
            <person name="Murphy G."/>
            <person name="Volckaert G."/>
            <person name="Pohl T."/>
            <person name="Duesterhoeft A."/>
            <person name="Stiekema W."/>
            <person name="Entian K.-D."/>
            <person name="Terryn N."/>
            <person name="Harris B."/>
            <person name="Ansorge W."/>
            <person name="Brandt P."/>
            <person name="Grivell L.A."/>
            <person name="Rieger M."/>
            <person name="Weichselgartner M."/>
            <person name="de Simone V."/>
            <person name="Obermaier B."/>
            <person name="Mache R."/>
            <person name="Mueller M."/>
            <person name="Kreis M."/>
            <person name="Delseny M."/>
            <person name="Puigdomenech P."/>
            <person name="Watson M."/>
            <person name="Schmidtheini T."/>
            <person name="Reichert B."/>
            <person name="Portetelle D."/>
            <person name="Perez-Alonso M."/>
            <person name="Boutry M."/>
            <person name="Bancroft I."/>
            <person name="Vos P."/>
            <person name="Hoheisel J."/>
            <person name="Zimmermann W."/>
            <person name="Wedler H."/>
            <person name="Ridley P."/>
            <person name="Langham S.-A."/>
            <person name="McCullagh B."/>
            <person name="Bilham L."/>
            <person name="Robben J."/>
            <person name="van der Schueren J."/>
            <person name="Grymonprez B."/>
            <person name="Chuang Y.-J."/>
            <person name="Vandenbussche F."/>
            <person name="Braeken M."/>
            <person name="Weltjens I."/>
            <person name="Voet M."/>
            <person name="Bastiaens I."/>
            <person name="Aert R."/>
            <person name="Defoor E."/>
            <person name="Weitzenegger T."/>
            <person name="Bothe G."/>
            <person name="Ramsperger U."/>
            <person name="Hilbert H."/>
            <person name="Braun M."/>
            <person name="Holzer E."/>
            <person name="Brandt A."/>
            <person name="Peters S."/>
            <person name="van Staveren M."/>
            <person name="Dirkse W."/>
            <person name="Mooijman P."/>
            <person name="Klein Lankhorst R."/>
            <person name="Rose M."/>
            <person name="Hauf J."/>
            <person name="Koetter P."/>
            <person name="Berneiser S."/>
            <person name="Hempel S."/>
            <person name="Feldpausch M."/>
            <person name="Lamberth S."/>
            <person name="Van den Daele H."/>
            <person name="De Keyser A."/>
            <person name="Buysshaert C."/>
            <person name="Gielen J."/>
            <person name="Villarroel R."/>
            <person name="De Clercq R."/>
            <person name="van Montagu M."/>
            <person name="Rogers J."/>
            <person name="Cronin A."/>
            <person name="Quail M.A."/>
            <person name="Bray-Allen S."/>
            <person name="Clark L."/>
            <person name="Doggett J."/>
            <person name="Hall S."/>
            <person name="Kay M."/>
            <person name="Lennard N."/>
            <person name="McLay K."/>
            <person name="Mayes R."/>
            <person name="Pettett A."/>
            <person name="Rajandream M.A."/>
            <person name="Lyne M."/>
            <person name="Benes V."/>
            <person name="Rechmann S."/>
            <person name="Borkova D."/>
            <person name="Bloecker H."/>
            <person name="Scharfe M."/>
            <person name="Grimm M."/>
            <person name="Loehnert T.-H."/>
            <person name="Dose S."/>
            <person name="de Haan M."/>
            <person name="Maarse A.C."/>
            <person name="Schaefer M."/>
            <person name="Mueller-Auer S."/>
            <person name="Gabel C."/>
            <person name="Fuchs M."/>
            <person name="Fartmann B."/>
            <person name="Granderath K."/>
            <person name="Dauner D."/>
            <person name="Herzl A."/>
            <person name="Neumann S."/>
            <person name="Argiriou A."/>
            <person name="Vitale D."/>
            <person name="Liguori R."/>
            <person name="Piravandi E."/>
            <person name="Massenet O."/>
            <person name="Quigley F."/>
            <person name="Clabauld G."/>
            <person name="Muendlein A."/>
            <person name="Felber R."/>
            <person name="Schnabl S."/>
            <person name="Hiller R."/>
            <person name="Schmidt W."/>
            <person name="Lecharny A."/>
            <person name="Aubourg S."/>
            <person name="Chefdor F."/>
            <person name="Cooke R."/>
            <person name="Berger C."/>
            <person name="Monfort A."/>
            <person name="Casacuberta E."/>
            <person name="Gibbons T."/>
            <person name="Weber N."/>
            <person name="Vandenbol M."/>
            <person name="Bargues M."/>
            <person name="Terol J."/>
            <person name="Torres A."/>
            <person name="Perez-Perez A."/>
            <person name="Purnelle B."/>
            <person name="Bent E."/>
            <person name="Johnson S."/>
            <person name="Tacon D."/>
            <person name="Jesse T."/>
            <person name="Heijnen L."/>
            <person name="Schwarz S."/>
            <person name="Scholler P."/>
            <person name="Heber S."/>
            <person name="Francs P."/>
            <person name="Bielke C."/>
            <person name="Frishman D."/>
            <person name="Haase D."/>
            <person name="Lemcke K."/>
            <person name="Mewes H.-W."/>
            <person name="Stocker S."/>
            <person name="Zaccaria P."/>
            <person name="Bevan M."/>
            <person name="Wilson R.K."/>
            <person name="de la Bastide M."/>
            <person name="Habermann K."/>
            <person name="Parnell L."/>
            <person name="Dedhia N."/>
            <person name="Gnoj L."/>
            <person name="Schutz K."/>
            <person name="Huang E."/>
            <person name="Spiegel L."/>
            <person name="Sekhon M."/>
            <person name="Murray J."/>
            <person name="Sheet P."/>
            <person name="Cordes M."/>
            <person name="Abu-Threideh J."/>
            <person name="Stoneking T."/>
            <person name="Kalicki J."/>
            <person name="Graves T."/>
            <person name="Harmon G."/>
            <person name="Edwards J."/>
            <person name="Latreille P."/>
            <person name="Courtney L."/>
            <person name="Cloud J."/>
            <person name="Abbott A."/>
            <person name="Scott K."/>
            <person name="Johnson D."/>
            <person name="Minx P."/>
            <person name="Bentley D."/>
            <person name="Fulton B."/>
            <person name="Miller N."/>
            <person name="Greco T."/>
            <person name="Kemp K."/>
            <person name="Kramer J."/>
            <person name="Fulton L."/>
            <person name="Mardis E."/>
            <person name="Dante M."/>
            <person name="Pepin K."/>
            <person name="Hillier L.W."/>
            <person name="Nelson J."/>
            <person name="Spieth J."/>
            <person name="Ryan E."/>
            <person name="Andrews S."/>
            <person name="Geisel C."/>
            <person name="Layman D."/>
            <person name="Du H."/>
            <person name="Ali J."/>
            <person name="Berghoff A."/>
            <person name="Jones K."/>
            <person name="Drone K."/>
            <person name="Cotton M."/>
            <person name="Joshu C."/>
            <person name="Antonoiu B."/>
            <person name="Zidanic M."/>
            <person name="Strong C."/>
            <person name="Sun H."/>
            <person name="Lamar B."/>
            <person name="Yordan C."/>
            <person name="Ma P."/>
            <person name="Zhong J."/>
            <person name="Preston R."/>
            <person name="Vil D."/>
            <person name="Shekher M."/>
            <person name="Matero A."/>
            <person name="Shah R."/>
            <person name="Swaby I.K."/>
            <person name="O'Shaughnessy A."/>
            <person name="Rodriguez M."/>
            <person name="Hoffman J."/>
            <person name="Till S."/>
            <person name="Granat S."/>
            <person name="Shohdy N."/>
            <person name="Hasegawa A."/>
            <person name="Hameed A."/>
            <person name="Lodhi M."/>
            <person name="Johnson A."/>
            <person name="Chen E."/>
            <person name="Marra M.A."/>
            <person name="Martienssen R."/>
            <person name="McCombie W.R."/>
        </authorList>
    </citation>
    <scope>NUCLEOTIDE SEQUENCE [LARGE SCALE GENOMIC DNA]</scope>
    <source>
        <strain>cv. Columbia</strain>
    </source>
</reference>
<reference key="5">
    <citation type="journal article" date="2017" name="Plant J.">
        <title>Araport11: a complete reannotation of the Arabidopsis thaliana reference genome.</title>
        <authorList>
            <person name="Cheng C.Y."/>
            <person name="Krishnakumar V."/>
            <person name="Chan A.P."/>
            <person name="Thibaud-Nissen F."/>
            <person name="Schobel S."/>
            <person name="Town C.D."/>
        </authorList>
    </citation>
    <scope>GENOME REANNOTATION</scope>
    <source>
        <strain>cv. Columbia</strain>
    </source>
</reference>
<reference key="6">
    <citation type="journal article" date="2003" name="Science">
        <title>Empirical analysis of transcriptional activity in the Arabidopsis genome.</title>
        <authorList>
            <person name="Yamada K."/>
            <person name="Lim J."/>
            <person name="Dale J.M."/>
            <person name="Chen H."/>
            <person name="Shinn P."/>
            <person name="Palm C.J."/>
            <person name="Southwick A.M."/>
            <person name="Wu H.C."/>
            <person name="Kim C.J."/>
            <person name="Nguyen M."/>
            <person name="Pham P.K."/>
            <person name="Cheuk R.F."/>
            <person name="Karlin-Newmann G."/>
            <person name="Liu S.X."/>
            <person name="Lam B."/>
            <person name="Sakano H."/>
            <person name="Wu T."/>
            <person name="Yu G."/>
            <person name="Miranda M."/>
            <person name="Quach H.L."/>
            <person name="Tripp M."/>
            <person name="Chang C.H."/>
            <person name="Lee J.M."/>
            <person name="Toriumi M.J."/>
            <person name="Chan M.M."/>
            <person name="Tang C.C."/>
            <person name="Onodera C.S."/>
            <person name="Deng J.M."/>
            <person name="Akiyama K."/>
            <person name="Ansari Y."/>
            <person name="Arakawa T."/>
            <person name="Banh J."/>
            <person name="Banno F."/>
            <person name="Bowser L."/>
            <person name="Brooks S.Y."/>
            <person name="Carninci P."/>
            <person name="Chao Q."/>
            <person name="Choy N."/>
            <person name="Enju A."/>
            <person name="Goldsmith A.D."/>
            <person name="Gurjal M."/>
            <person name="Hansen N.F."/>
            <person name="Hayashizaki Y."/>
            <person name="Johnson-Hopson C."/>
            <person name="Hsuan V.W."/>
            <person name="Iida K."/>
            <person name="Karnes M."/>
            <person name="Khan S."/>
            <person name="Koesema E."/>
            <person name="Ishida J."/>
            <person name="Jiang P.X."/>
            <person name="Jones T."/>
            <person name="Kawai J."/>
            <person name="Kamiya A."/>
            <person name="Meyers C."/>
            <person name="Nakajima M."/>
            <person name="Narusaka M."/>
            <person name="Seki M."/>
            <person name="Sakurai T."/>
            <person name="Satou M."/>
            <person name="Tamse R."/>
            <person name="Vaysberg M."/>
            <person name="Wallender E.K."/>
            <person name="Wong C."/>
            <person name="Yamamura Y."/>
            <person name="Yuan S."/>
            <person name="Shinozaki K."/>
            <person name="Davis R.W."/>
            <person name="Theologis A."/>
            <person name="Ecker J.R."/>
        </authorList>
    </citation>
    <scope>NUCLEOTIDE SEQUENCE [LARGE SCALE MRNA]</scope>
    <source>
        <strain>cv. Columbia</strain>
    </source>
</reference>
<reference key="7">
    <citation type="submission" date="2006-07" db="EMBL/GenBank/DDBJ databases">
        <title>Large-scale analysis of RIKEN Arabidopsis full-length (RAFL) cDNAs.</title>
        <authorList>
            <person name="Totoki Y."/>
            <person name="Seki M."/>
            <person name="Ishida J."/>
            <person name="Nakajima M."/>
            <person name="Enju A."/>
            <person name="Kamiya A."/>
            <person name="Narusaka M."/>
            <person name="Shin-i T."/>
            <person name="Nakagawa M."/>
            <person name="Sakamoto N."/>
            <person name="Oishi K."/>
            <person name="Kohara Y."/>
            <person name="Kobayashi M."/>
            <person name="Toyoda A."/>
            <person name="Sakaki Y."/>
            <person name="Sakurai T."/>
            <person name="Iida K."/>
            <person name="Akiyama K."/>
            <person name="Satou M."/>
            <person name="Toyoda T."/>
            <person name="Konagaya A."/>
            <person name="Carninci P."/>
            <person name="Kawai J."/>
            <person name="Hayashizaki Y."/>
            <person name="Shinozaki K."/>
        </authorList>
    </citation>
    <scope>NUCLEOTIDE SEQUENCE [LARGE SCALE MRNA]</scope>
    <source>
        <strain>cv. Columbia</strain>
    </source>
</reference>
<reference key="8">
    <citation type="journal article" date="1984" name="Physiol. Plantarum">
        <title>The isolation and characterization of abscisic-acid insensitive mutants of Arabidopsis thaliana.</title>
        <authorList>
            <person name="Kornneef M."/>
            <person name="Reuling G."/>
            <person name="Karssen C.M."/>
        </authorList>
    </citation>
    <scope>FUNCTION</scope>
</reference>
<reference key="9">
    <citation type="journal article" date="1991" name="Plant Mol. Biol.">
        <title>Cold acclimation and cold-regulated gene expression in ABA mutants of Arabidopsis thaliana.</title>
        <authorList>
            <person name="Gilmour S.J."/>
            <person name="Thomashow M.F."/>
        </authorList>
    </citation>
    <scope>FUNCTION</scope>
</reference>
<reference key="10">
    <citation type="journal article" date="1992" name="Plant Physiol.">
        <title>Abscisic acid elicits the water-stress response in root hairs of Arabidopsis thaliana.</title>
        <authorList>
            <person name="Schnall J.A."/>
            <person name="Quatrano R.S."/>
        </authorList>
    </citation>
    <scope>FUNCTION</scope>
</reference>
<reference key="11">
    <citation type="journal article" date="1993" name="Mol. Gen. Genet.">
        <title>Abscisic acid-insensitive mutations provide evidence for stage-specific signal pathways regulating expression of an Arabidopsis late embryogenesis-abundant (lea) gene.</title>
        <authorList>
            <person name="Finkelstein R.R."/>
        </authorList>
    </citation>
    <scope>FUNCTION</scope>
</reference>
<reference key="12">
    <citation type="journal article" date="1994" name="Plant Physiol.">
        <title>Maternal effects govern variable dominance of two abscisic acid response mutations in Arabidopsis thaliana.</title>
        <authorList>
            <person name="Finkelstein R.R."/>
        </authorList>
    </citation>
    <scope>FUNCTION</scope>
</reference>
<reference key="13">
    <citation type="journal article" date="1994" name="Plant Physiol.">
        <title>Drought rhizogenesis in Arabidopsis thaliana (differential responses of hormonal mutants).</title>
        <authorList>
            <person name="Vartanian N."/>
            <person name="Marcotte L."/>
            <person name="Giraudat J."/>
        </authorList>
    </citation>
    <scope>FUNCTION</scope>
</reference>
<reference key="14">
    <citation type="journal article" date="1995" name="Proc. Natl. Acad. Sci. U.S.A.">
        <title>Sensitivity to abscisic acid of guard-cell K+ channels is suppressed by abi1-1, a mutant Arabidopsis gene encoding a putative protein phosphatase.</title>
        <authorList>
            <person name="Armstrong F."/>
            <person name="Leung J."/>
            <person name="Grabov A."/>
            <person name="Brearley J."/>
            <person name="Giraudat J."/>
            <person name="Blatt M.R."/>
        </authorList>
    </citation>
    <scope>FUNCTION</scope>
</reference>
<reference key="15">
    <citation type="journal article" date="1995" name="Plant Physiol.">
        <title>Role of abscisic acid in drought-induced freezing tolerance, cold acclimation, and accumulation of lt178 and rab18 proteins in Arabidopsis thaliana.</title>
        <authorList>
            <person name="Maentylae E."/>
            <person name="Laang V."/>
            <person name="Palva E.T."/>
        </authorList>
    </citation>
    <scope>FUNCTION</scope>
</reference>
<reference key="16">
    <citation type="journal article" date="1996" name="Eur. J. Biochem.">
        <title>Protein phosphatase activity of abscisic acid insensitive 1 (ABI1) protein from Arabidopsis thaliana.</title>
        <authorList>
            <person name="Bertauche N."/>
            <person name="Leung J."/>
            <person name="Giraudat J."/>
        </authorList>
    </citation>
    <scope>FUNCTION</scope>
    <scope>MUTAGENESIS OF GLY-180</scope>
    <scope>CATALYTIC ACTIVITY</scope>
    <scope>COFACTOR</scope>
</reference>
<reference key="17">
    <citation type="journal article" date="1996" name="Plant J.">
        <title>The Arabidopsis homeobox gene ATHB-7 is induced by water deficit and by abscisic acid.</title>
        <authorList>
            <person name="Soederman E."/>
            <person name="Mattsson J."/>
            <person name="Engstroem P."/>
        </authorList>
    </citation>
    <scope>FUNCTION</scope>
</reference>
<reference key="18">
    <citation type="journal article" date="1997" name="Mol. Gen. Genet.">
        <title>Abscisic acid-independent and abscisic acid-dependent regulation of proline biosynthesis following cold and osmotic stresses in Arabidopsis thaliana.</title>
        <authorList>
            <person name="Savoure A."/>
            <person name="Hua X.-J."/>
            <person name="Bertauche N."/>
            <person name="Van Montagu M."/>
            <person name="Verbruggen N."/>
        </authorList>
    </citation>
    <scope>FUNCTION</scope>
</reference>
<reference key="19">
    <citation type="journal article" date="1997" name="Plant Cell">
        <title>Differential abscisic acid regulation of guard cell slow anion channels in Arabidopsis wild-type and abi1 and abi2 mutants.</title>
        <authorList>
            <person name="Pei Z.-M."/>
            <person name="Kuchitsu K."/>
            <person name="Ward J.M."/>
            <person name="Schwarz M."/>
            <person name="Schroeder J.I."/>
        </authorList>
    </citation>
    <scope>FUNCTION</scope>
</reference>
<reference key="20">
    <citation type="journal article" date="1997" name="Plant Cell">
        <title>The Arabidopsis ABSCISIC ACID-INSENSITIVE2 (ABI2) and ABI1 genes encode homologous protein phosphatases 2C involved in abscisic acid signal transduction.</title>
        <authorList>
            <person name="Leung J."/>
            <person name="Merlot S."/>
            <person name="Giraudat J."/>
        </authorList>
    </citation>
    <scope>FUNCTION</scope>
</reference>
<reference key="21">
    <citation type="journal article" date="1997" name="Plant J.">
        <title>Interactions between the ABI1 and the ectopically expressed ABI3 genes in controlling abscisic acid responses in Arabidopsis vegetative tissues.</title>
        <authorList>
            <person name="Parcy F."/>
            <person name="Giraudat J."/>
        </authorList>
    </citation>
    <scope>FUNCTION</scope>
</reference>
<reference key="22">
    <citation type="journal article" date="1997" name="Plant J.">
        <title>Alteration of anion channel kinetics in wild-type and abi1-1 transgenic Nicotiana benthamiana guard cells by abscisic acid.</title>
        <authorList>
            <person name="Grabov A."/>
            <person name="Leung J."/>
            <person name="Giraudat J."/>
            <person name="Blatt M.R."/>
        </authorList>
    </citation>
    <scope>FUNCTION</scope>
</reference>
<reference key="23">
    <citation type="journal article" date="1997" name="Plant J.">
        <title>Differential expression of two P5CS genes controlling proline accumulation during salt-stress requires ABA and is regulated by ABA1, ABI1 and AXR2 in Arabidopsis.</title>
        <authorList>
            <person name="Strizhov N."/>
            <person name="Abraham E."/>
            <person name="Oekresz L."/>
            <person name="Blickling S."/>
            <person name="Zilberstein A."/>
            <person name="Schell J."/>
            <person name="Koncz C."/>
            <person name="Szabados L."/>
        </authorList>
    </citation>
    <scope>FUNCTION</scope>
</reference>
<reference key="24">
    <citation type="journal article" date="1997" name="Plant Physiol.">
        <title>Convergence of the abscisic acid, CO2, and extracellular calcium signal transduction pathways in stomatal guard cells.</title>
        <authorList>
            <person name="Webb A.A.R."/>
            <person name="Hetherington A.M."/>
        </authorList>
    </citation>
    <scope>FUNCTION</scope>
</reference>
<reference key="25">
    <citation type="journal article" date="1998" name="FEBS Lett.">
        <title>ABI1 of Arabidopsis is a protein serine/threonine phosphatase highly regulated by the proton and magnesium ion concentration.</title>
        <authorList>
            <person name="Leube M.P."/>
            <person name="Grill E."/>
            <person name="Amrhein N."/>
        </authorList>
    </citation>
    <scope>CATALYTIC ACTIVITY</scope>
    <scope>MUTAGENESIS OF GLY-180</scope>
    <scope>BIOPHYSICOCHEMICAL PROPERTIES</scope>
    <scope>COFACTOR</scope>
</reference>
<reference key="26">
    <citation type="journal article" date="1998" name="Proc. Natl. Acad. Sci. U.S.A.">
        <title>Mutational analysis of protein phosphatase 2C involved in abscisic acid signal transduction in higher plants.</title>
        <authorList>
            <person name="Sheen J."/>
        </authorList>
    </citation>
    <scope>FUNCTION</scope>
    <scope>MUTAGENESIS OF ASP-93; 141-MET--ASP-143; GLY-174; 177-ASP--HIS-179 AND GLY-180</scope>
</reference>
<reference key="27">
    <citation type="journal article" date="1998" name="Symp. Soc. Exp. Biol.">
        <title>The role of ABI1 in abscisic acid signal transduction: from gene to cell.</title>
        <authorList>
            <person name="Leung J."/>
            <person name="Merlot S."/>
            <person name="Gosti F."/>
            <person name="Bertauche N."/>
            <person name="Blatt M.R."/>
            <person name="Giraudat J."/>
        </authorList>
    </citation>
    <scope>FUNCTION</scope>
    <scope>CATALYTIC ACTIVITY</scope>
</reference>
<reference key="28">
    <citation type="journal article" date="1999" name="Plant Cell">
        <title>Arabidopsis abi1-1 and abi2-1 phosphatase mutations reduce abscisic acid-induced cytoplasmic calcium rises in guard cells.</title>
        <authorList>
            <person name="Allen G.J."/>
            <person name="Kuchitsu K."/>
            <person name="Chu S.P."/>
            <person name="Murata Y."/>
            <person name="Schroeder J.I."/>
        </authorList>
    </citation>
    <scope>FUNCTION</scope>
</reference>
<reference key="29">
    <citation type="journal article" date="1999" name="Plant Cell">
        <title>ABI1 protein phosphatase 2C is a negative regulator of abscisic acid signaling.</title>
        <authorList>
            <person name="Gosti F."/>
            <person name="Beaudoin N."/>
            <person name="Serizet C."/>
            <person name="Webb A.A.R."/>
            <person name="Vartanian N."/>
            <person name="Giraudat J."/>
        </authorList>
    </citation>
    <scope>FUNCTION</scope>
    <scope>MUTAGENESIS OF GLY-180; ALA-185; CYS-259; ARG-304; GLY-307; SER-314; PRO-328 AND SER-416</scope>
</reference>
<reference key="30">
    <citation type="journal article" date="2000" name="Genes Dev.">
        <title>Analysis of Arabidopsis glucose insensitive mutants, gin5 and gin6, reveals a central role of the plant hormone ABA in the regulation of plant vegetative development by sugar.</title>
        <authorList>
            <person name="Arenas-Huertero F."/>
            <person name="Arroyo A."/>
            <person name="Zhou L."/>
            <person name="Sheen J."/>
            <person name="Leon P."/>
        </authorList>
    </citation>
    <scope>FUNCTION</scope>
</reference>
<reference key="31">
    <citation type="journal article" date="2000" name="Planta">
        <title>The genes ABI1 and ABI2 are involved in abscisic acid- and drought-inducible expression of the Daucus carota L. Dc3 promoter in guard cells of transgenic Arabidopsis thaliana (L.) Heynh.</title>
        <authorList>
            <person name="Chak R.K.F."/>
            <person name="Thomas T.L."/>
            <person name="Quatrano R.S."/>
            <person name="Rock C.D."/>
        </authorList>
    </citation>
    <scope>FUNCTION</scope>
</reference>
<reference key="32">
    <citation type="journal article" date="2001" name="Proc. Natl. Acad. Sci. U.S.A.">
        <title>The role of ABA and the transpiration stream in the regulation of the osmotic water permeability of leaf cells.</title>
        <authorList>
            <person name="Morillon R."/>
            <person name="Chrispeels M.J."/>
        </authorList>
    </citation>
    <scope>FUNCTION</scope>
</reference>
<reference key="33">
    <citation type="journal article" date="2001" name="Plant J.">
        <title>The ABI1 and ABI2 protein phosphatases 2C act in a negative feedback regulatory loop of the abscisic acid signalling pathway.</title>
        <authorList>
            <person name="Merlot S."/>
            <person name="Gosti F."/>
            <person name="Guerrier D."/>
            <person name="Vavasseur A."/>
            <person name="Giraudat J."/>
        </authorList>
    </citation>
    <scope>FUNCTION</scope>
</reference>
<reference key="34">
    <citation type="journal article" date="2001" name="Plant Mol. Biol.">
        <title>Dissection of abscisic acid signal transduction pathways in barley aleurone layers.</title>
        <authorList>
            <person name="Shen Q."/>
            <person name="Gomez-Cadenas A."/>
            <person name="Zhang P."/>
            <person name="Walker-Simmons M.K."/>
            <person name="Sheen J."/>
            <person name="Ho T.-H.D."/>
        </authorList>
    </citation>
    <scope>FUNCTION</scope>
</reference>
<reference key="35">
    <citation type="journal article" date="2001" name="Planta">
        <title>Cortical actin filaments in guard cells respond differently to abscisic acid in wild-type and abi1-1 mutant Arabidopsis.</title>
        <authorList>
            <person name="Eun S.-O."/>
            <person name="Bae S.-H."/>
            <person name="Lee Y."/>
        </authorList>
    </citation>
    <scope>FUNCTION</scope>
</reference>
<reference key="36">
    <citation type="journal article" date="2001" name="Plant J.">
        <title>Antisense inhibition of protein phosphatase 2C accelerates cold acclimation in Arabidopsis thaliana.</title>
        <authorList>
            <person name="Taehtiharju S."/>
            <person name="Palva T."/>
        </authorList>
    </citation>
    <scope>INDUCTION</scope>
</reference>
<reference key="37">
    <citation type="journal article" date="2001" name="Plant Cell">
        <title>Abscisic acid activation of plasma membrane Ca(2+) channels in guard cells requires cytosolic NAD(P)H and is differentially disrupted upstream and downstream of reactive oxygen species production in abi1-1 and abi2-1 protein phosphatase 2C mutants.</title>
        <authorList>
            <person name="Murata Y."/>
            <person name="Pei Z.-M."/>
            <person name="Mori I.C."/>
            <person name="Schroeder J."/>
        </authorList>
    </citation>
    <scope>FUNCTION</scope>
</reference>
<reference key="38">
    <citation type="journal article" date="2002" name="Dev. Cell">
        <title>A calcium sensor and its interacting protein kinase are global regulators of abscisic acid signaling in Arabidopsis.</title>
        <authorList>
            <person name="Guo Y."/>
            <person name="Xiong L."/>
            <person name="Song C.-P."/>
            <person name="Gong D."/>
            <person name="Halfter U."/>
            <person name="Zhu J.-K."/>
        </authorList>
    </citation>
    <scope>FUNCTION</scope>
    <scope>INTERACTION WITH CIPK15/PKS3</scope>
</reference>
<reference key="39">
    <citation type="journal article" date="2002" name="EMBO J.">
        <title>Homeodomain protein ATHB6 is a target of the protein phosphatase ABI1 and regulates hormone responses in Arabidopsis.</title>
        <authorList>
            <person name="Himmelbach A."/>
            <person name="Hoffmann T."/>
            <person name="Leube M."/>
            <person name="Hoehener B."/>
            <person name="Grill E."/>
        </authorList>
    </citation>
    <scope>FUNCTION</scope>
    <scope>MUTAGENESIS OF ASP-177 AND GLY-180</scope>
    <scope>INTERACTION WITH ATHB-6</scope>
</reference>
<reference key="40">
    <citation type="journal article" date="2002" name="J. Cell Sci.">
        <title>Genome-wide gene expression profiling in Arabidopsis thaliana reveals new targets of abscisic acid and largely impaired gene regulation in the abi1-1 mutant.</title>
        <authorList>
            <person name="Hoth S."/>
            <person name="Morgante M."/>
            <person name="Sanchez J.-P."/>
            <person name="Hanafey M.K."/>
            <person name="Tingey S.V."/>
            <person name="Chua N.-H."/>
        </authorList>
    </citation>
    <scope>FUNCTION</scope>
</reference>
<reference key="41">
    <citation type="journal article" date="2002" name="Plant J.">
        <title>Use of infrared thermal imaging to isolate Arabidopsis mutants defective in stomatal regulation.</title>
        <authorList>
            <person name="Merlot S."/>
            <person name="Mustilli A.-C."/>
            <person name="Genty B."/>
            <person name="North H."/>
            <person name="Lefebvre V."/>
            <person name="Sotta B."/>
            <person name="Vavasseur A."/>
            <person name="Giraudat J."/>
        </authorList>
    </citation>
    <scope>FUNCTION</scope>
</reference>
<reference key="42">
    <citation type="journal article" date="2003" name="Plant J.">
        <title>The abi1-1 mutation blocks ABA signaling downstream of cADPR action.</title>
        <authorList>
            <person name="Wu Y."/>
            <person name="Sanchez J.P."/>
            <person name="Lopez-Molina L."/>
            <person name="Himmelbach A."/>
            <person name="Grill E."/>
            <person name="Chua N.-H."/>
        </authorList>
    </citation>
    <scope>FUNCTION</scope>
</reference>
<reference key="43">
    <citation type="journal article" date="2003" name="Plant Physiol.">
        <title>Synthesis of the Arabidopsis bifunctional lysine-ketoglutarate reductase/saccharopine dehydrogenase enzyme of lysine catabolism is concertedly regulated by metabolic and stress-associated signals.</title>
        <authorList>
            <person name="Stepansky A."/>
            <person name="Galili G."/>
        </authorList>
    </citation>
    <scope>FUNCTION</scope>
</reference>
<reference key="44">
    <citation type="journal article" date="2003" name="FEBS Lett.">
        <title>Regulation of the ABA-sensitive Arabidopsis potassium channel gene GORK in response to water stress.</title>
        <authorList>
            <person name="Becker D."/>
            <person name="Hoth S."/>
            <person name="Ache P."/>
            <person name="Wenkel S."/>
            <person name="Roelfsema M.R.G."/>
            <person name="Meyerhoff O."/>
            <person name="Hartung W."/>
            <person name="Hedrich R."/>
        </authorList>
    </citation>
    <scope>FUNCTION</scope>
</reference>
<reference key="45">
    <citation type="journal article" date="2003" name="Plant J.">
        <title>Control of Ascorbate Peroxidase 2 expression by hydrogen peroxide and leaf water status during excess light stress reveals a functional organisation of Arabidopsis leaves.</title>
        <authorList>
            <person name="Fryer M.J."/>
            <person name="Ball L."/>
            <person name="Oxborough K."/>
            <person name="Karpinski S."/>
            <person name="Mullineaux P.M."/>
            <person name="Baker N.R."/>
        </authorList>
    </citation>
    <scope>FUNCTION</scope>
</reference>
<reference key="46">
    <citation type="journal article" date="2004" name="Plant J.">
        <title>Gain-of-function and loss-of-function phenotypes of the protein phosphatase 2C HAB1 reveal its role as a negative regulator of abscisic acid signalling.</title>
        <authorList>
            <person name="Saez A."/>
            <person name="Apostolova N."/>
            <person name="Gonzalez-Guzman M."/>
            <person name="Gonzalez-Garcia M.P."/>
            <person name="Nicolas C."/>
            <person name="Lorenzo O."/>
            <person name="Rodriguez P.L."/>
        </authorList>
    </citation>
    <scope>INDUCTION BY ABA</scope>
</reference>
<reference key="47">
    <citation type="journal article" date="2004" name="Plant J.">
        <title>Drought tolerance established by enhanced expression of the CC-NBS-LRR gene, ADR1, requires salicylic acid, EDS1 and ABI1.</title>
        <authorList>
            <person name="Chini A."/>
            <person name="Grant J.J."/>
            <person name="Seki M."/>
            <person name="Shinozaki K."/>
            <person name="Loake G.J."/>
        </authorList>
    </citation>
    <scope>FUNCTION</scope>
</reference>
<reference key="48">
    <citation type="journal article" date="2004" name="Proc. Natl. Acad. Sci. U.S.A.">
        <title>Phospholipase D alpha 1-derived phosphatidic acid interacts with ABI1 phosphatase 2C and regulates abscisic acid signaling.</title>
        <authorList>
            <person name="Zhang W."/>
            <person name="Qin C."/>
            <person name="Zhao J."/>
            <person name="Wang X."/>
        </authorList>
    </citation>
    <scope>FUNCTION</scope>
    <scope>MUTAGENESIS OF 67-ARG-LYS-68 AND ARG-73</scope>
    <scope>SUBCELLULAR LOCATION</scope>
    <scope>ACTIVITY REGULATION</scope>
    <scope>INTERACTION WITH PA</scope>
</reference>
<reference key="49">
    <citation type="journal article" date="2004" name="Trends Plant Sci.">
        <title>Plant PP2C phosphatases: emerging functions in stress signaling.</title>
        <authorList>
            <person name="Schweighofer A."/>
            <person name="Hirt H."/>
            <person name="Meskiene I."/>
        </authorList>
    </citation>
    <scope>GENE FAMILY</scope>
    <scope>NOMENCLATURE</scope>
</reference>
<reference key="50">
    <citation type="journal article" date="2005" name="Plant Physiol.">
        <title>Generation of active pools of abscisic acid revealed by in vivo imaging of water-stressed Arabidopsis.</title>
        <authorList>
            <person name="Christmann A."/>
            <person name="Hoffmann T."/>
            <person name="Teplova I."/>
            <person name="Grill E."/>
            <person name="Mueller A."/>
        </authorList>
    </citation>
    <scope>FUNCTION</scope>
</reference>
<reference key="51">
    <citation type="journal article" date="2005" name="Plant Physiol.">
        <title>Heat stress phenotypes of Arabidopsis mutants implicate multiple signaling pathways in the acquisition of thermotolerance.</title>
        <authorList>
            <person name="Larkindale J."/>
            <person name="Hall J.D."/>
            <person name="Knight M.R."/>
            <person name="Vierling E."/>
        </authorList>
    </citation>
    <scope>FUNCTION</scope>
</reference>
<reference key="52">
    <citation type="journal article" date="2006" name="J. Biol. Chem.">
        <title>The regulatory domain of SRK2E/OST1/SnRK2.6 interacts with ABI1 and integrates abscisic acid (ABA) and osmotic stress signals controlling stomatal closure in Arabidopsis.</title>
        <authorList>
            <person name="Yoshida R."/>
            <person name="Umezawa T."/>
            <person name="Mizoguchi T."/>
            <person name="Takahashi S."/>
            <person name="Takahashi F."/>
            <person name="Shinozaki K."/>
        </authorList>
    </citation>
    <scope>FUNCTION</scope>
    <scope>INTERACTION WITH SRK2E</scope>
</reference>
<reference key="53">
    <citation type="journal article" date="2006" name="J. Exp. Bot.">
        <title>Role of abscisic acid (ABA) and Arabidopsis thaliana ABA-insensitive loci in low water potential-induced ABA and proline accumulation.</title>
        <authorList>
            <person name="Verslues P.E."/>
            <person name="Bray E.A."/>
        </authorList>
    </citation>
    <scope>FUNCTION</scope>
</reference>
<reference key="54">
    <citation type="journal article" date="2006" name="Plant Cell">
        <title>An Arabidopsis glutathione peroxidase functions as both a redox transducer and a scavenger in abscisic acid and drought stress responses.</title>
        <authorList>
            <person name="Miao Y."/>
            <person name="Lv D."/>
            <person name="Wang P."/>
            <person name="Wang X.-C."/>
            <person name="Chen J."/>
            <person name="Miao C."/>
            <person name="Song C.-P."/>
        </authorList>
    </citation>
    <scope>INTERACTION WITH GPX3</scope>
    <scope>REPRESSION BY OXIDIZED GPX3</scope>
</reference>
<reference key="55">
    <citation type="journal article" date="2006" name="Proc. Natl. Acad. Sci. U.S.A.">
        <title>Fibrillin expression is regulated by abscisic acid response regulators and is involved in abscisic acid-mediated photoprotection.</title>
        <authorList>
            <person name="Yang Y."/>
            <person name="Sulpice R."/>
            <person name="Himmelbach A."/>
            <person name="Meinhard M."/>
            <person name="Christmann A."/>
            <person name="Grill E."/>
        </authorList>
    </citation>
    <scope>FUNCTION</scope>
    <scope>MUTAGENESIS OF ASP-177</scope>
</reference>
<reference key="56">
    <citation type="journal article" date="2006" name="Plant Physiol.">
        <title>ABA-hypersensitive germination3 encodes a protein phosphatase 2C (AtPP2CA) that strongly regulates abscisic acid signaling during germination among Arabidopsis protein phosphatase 2Cs.</title>
        <authorList>
            <person name="Yoshida T."/>
            <person name="Nishimura N."/>
            <person name="Kitahata N."/>
            <person name="Kuromori T."/>
            <person name="Ito T."/>
            <person name="Asami T."/>
            <person name="Shinozaki K."/>
            <person name="Hirayama T."/>
        </authorList>
    </citation>
    <scope>INDUCTION BY ABA</scope>
    <scope>TISSUE SPECIFICITY</scope>
</reference>
<reference key="57">
    <citation type="journal article" date="2006" name="Plant Physiol.">
        <title>Enhancement of abscisic acid sensitivity and reduction of water consumption in Arabidopsis by combined inactivation of the protein phosphatases type 2C ABI1 and HAB1.</title>
        <authorList>
            <person name="Saez A."/>
            <person name="Robert N."/>
            <person name="Maktabi M.H."/>
            <person name="Schroeder J.I."/>
            <person name="Serrano R."/>
            <person name="Rodriguez P.L."/>
        </authorList>
    </citation>
    <scope>FUNCTION</scope>
</reference>
<reference key="58">
    <citation type="journal article" date="2006" name="Science">
        <title>A bifurcating pathway directs abscisic acid effects on stomatal closure and opening in Arabidopsis.</title>
        <authorList>
            <person name="Mishra G."/>
            <person name="Zhang W."/>
            <person name="Deng F."/>
            <person name="Zhao J."/>
            <person name="Wang X."/>
        </authorList>
    </citation>
    <scope>FUNCTION</scope>
    <scope>INTERACTION WITH PA</scope>
    <scope>ACTIVITY REGULATION</scope>
    <scope>MUTAGENESIS OF ARG-73</scope>
</reference>
<reference key="59">
    <citation type="journal article" date="2007" name="Development">
        <title>The role of Arabidopsis SCAR genes in ARP2-ARP3-dependent cell morphogenesis.</title>
        <authorList>
            <person name="Uhrig J.F."/>
            <person name="Mutondo M."/>
            <person name="Zimmermann I."/>
            <person name="Deeks M.J."/>
            <person name="Machesky L.M."/>
            <person name="Thomas P."/>
            <person name="Uhrig S."/>
            <person name="Rambke C."/>
            <person name="Hussey P.J."/>
            <person name="Huelskamp M."/>
        </authorList>
    </citation>
    <scope>INTERACTION WITH SPK1; SCAR1; SCAR2; SCAR3 AND SCARL</scope>
</reference>
<reference key="60">
    <citation type="journal article" date="2007" name="EMBO J.">
        <title>Pseudomonas syringae pv. tomato hijacks the Arabidopsis abscisic acid signalling pathway to cause disease.</title>
        <authorList>
            <person name="de Torres-Zabala M."/>
            <person name="Truman W."/>
            <person name="Bennett M.H."/>
            <person name="Lafforgue G."/>
            <person name="Mansfield J.W."/>
            <person name="Rodriguez Egea P."/>
            <person name="Boegre L."/>
            <person name="Grant M."/>
        </authorList>
    </citation>
    <scope>FUNCTION</scope>
</reference>
<reference key="61">
    <citation type="journal article" date="2007" name="Plant Physiol.">
        <title>Abscisic acid antagonizes ethylene-induced hyponastic growth in Arabidopsis.</title>
        <authorList>
            <person name="Benschop J.J."/>
            <person name="Millenaar F.F."/>
            <person name="Smeets M.E."/>
            <person name="van Zanten M."/>
            <person name="Voesenek L.A.C.J."/>
            <person name="Peeters A.J.M."/>
        </authorList>
    </citation>
    <scope>FUNCTION</scope>
    <scope>INDUCTION BY ETHYLENE</scope>
</reference>
<reference key="62">
    <citation type="journal article" date="2008" name="BMC Genomics">
        <title>Genome-wide and expression analysis of protein phosphatase 2C in rice and Arabidopsis.</title>
        <authorList>
            <person name="Xue T."/>
            <person name="Wang D."/>
            <person name="Zhang S."/>
            <person name="Ehlting J."/>
            <person name="Ni F."/>
            <person name="Jacab S."/>
            <person name="Zheng C."/>
            <person name="Zhong Y."/>
        </authorList>
    </citation>
    <scope>GENE FAMILY</scope>
    <scope>NOMENCLATURE</scope>
</reference>
<reference key="63">
    <citation type="journal article" date="2008" name="Plant J.">
        <title>Nuclear localization of the mutant protein phosphatase abi1 is required for insensitivity towards ABA responses in Arabidopsis.</title>
        <authorList>
            <person name="Moes D."/>
            <person name="Himmelbach A."/>
            <person name="Korte A."/>
            <person name="Haberer G."/>
            <person name="Grill E."/>
        </authorList>
    </citation>
    <scope>FUNCTION</scope>
    <scope>MUTAGENESIS OF ASP-177; GLY-180 AND 425-ARG--LYS-427</scope>
    <scope>NUCLEAR LOCALIZATION SIGNAL</scope>
    <scope>TISSUE SPECIFICITY</scope>
    <scope>SUBCELLULAR LOCATION</scope>
</reference>
<reference key="64">
    <citation type="journal article" date="2008" name="Plant Physiol.">
        <title>Overexpression of AtMYB44 enhances stomatal closure to confer abiotic stress tolerance in transgenic Arabidopsis.</title>
        <authorList>
            <person name="Jung C."/>
            <person name="Seo J.S."/>
            <person name="Han S.W."/>
            <person name="Koo Y.J."/>
            <person name="Kim C.H."/>
            <person name="Song S.I."/>
            <person name="Nahm B.H."/>
            <person name="Choi Y.D."/>
            <person name="Cheong J.-J."/>
        </authorList>
    </citation>
    <scope>INDUCTION BY MYB44 AND SALT</scope>
</reference>
<reference key="65">
    <citation type="journal article" date="2009" name="Proc. Natl. Acad. Sci. U.S.A.">
        <title>Activity of guard cell anion channel SLAC1 is controlled by drought-stress signaling kinase-phosphatase pair.</title>
        <authorList>
            <person name="Geiger D."/>
            <person name="Scherzer S."/>
            <person name="Mumm P."/>
            <person name="Stange A."/>
            <person name="Marten I."/>
            <person name="Bauer H."/>
            <person name="Ache P."/>
            <person name="Matschi S."/>
            <person name="Liese A."/>
            <person name="Al-Rasheid K.A.S."/>
            <person name="Romeis T."/>
            <person name="Hedrich R."/>
        </authorList>
    </citation>
    <scope>FUNCTION</scope>
    <scope>INTERACTION WITH SRK2E/OST1</scope>
</reference>
<reference key="66">
    <citation type="journal article" date="2009" name="Science">
        <title>Regulators of PP2C phosphatase activity function as abscisic acid sensors.</title>
        <authorList>
            <person name="Ma Y."/>
            <person name="Szostkiewicz I."/>
            <person name="Korte A."/>
            <person name="Moes D."/>
            <person name="Yang Y."/>
            <person name="Christmann A."/>
            <person name="Grill E."/>
        </authorList>
    </citation>
    <scope>INTERACTION WITH PYL9/RCAR1</scope>
</reference>
<reference key="67">
    <citation type="journal article" date="2009" name="Science">
        <title>Abscisic acid inhibits type 2C protein phosphatases via the PYR/PYL family of START proteins.</title>
        <authorList>
            <person name="Park S.-Y."/>
            <person name="Fung P."/>
            <person name="Nishimura N."/>
            <person name="Jensen D.R."/>
            <person name="Fujii H."/>
            <person name="Zhao Y."/>
            <person name="Lumba S."/>
            <person name="Santiago J."/>
            <person name="Rodrigues A."/>
            <person name="Chow T.F."/>
            <person name="Alfred S.E."/>
            <person name="Bonetta D."/>
            <person name="Finkelstein R."/>
            <person name="Provart N.J."/>
            <person name="Desveaux D."/>
            <person name="Rodriguez P.L."/>
            <person name="McCourt P."/>
            <person name="Zhu J.-K."/>
            <person name="Schroeder J.I."/>
            <person name="Volkman B.F."/>
            <person name="Cutler S.R."/>
        </authorList>
    </citation>
    <scope>INTERACTION WITH PYR1; PYL1; PYL2; PYL3 AND PYL4</scope>
    <scope>MUTAGENESIS OF GLY-180</scope>
    <scope>ACTIVITY REGULATION</scope>
</reference>
<reference key="68">
    <citation type="journal article" date="2009" name="Science">
        <title>Structural mechanism of abscisic acid binding and signaling by dimeric PYR1.</title>
        <authorList>
            <person name="Nishimura N."/>
            <person name="Hitomi K."/>
            <person name="Arvai A.S."/>
            <person name="Rambo R.P."/>
            <person name="Hitomi C."/>
            <person name="Cutler S.R."/>
            <person name="Schroeder J.I."/>
            <person name="Getzoff E.D."/>
        </authorList>
    </citation>
    <scope>INTERACTION WITH PYR1</scope>
</reference>
<reference key="69">
    <citation type="journal article" date="2010" name="Plant J.">
        <title>Closely related receptor complexes differ in their ABA selectivity and sensitivity.</title>
        <authorList>
            <person name="Szostkiewicz I."/>
            <person name="Richter K."/>
            <person name="Kepka M."/>
            <person name="Demmel S."/>
            <person name="Ma Y."/>
            <person name="Korte A."/>
            <person name="Assaad F.F."/>
            <person name="Christmann A."/>
            <person name="Grill E."/>
        </authorList>
    </citation>
    <scope>INTERACTION WITH PYL8/RCAR3</scope>
    <scope>ACTIVITY REGULATION BY PYR/PYL/RCAR</scope>
</reference>
<reference key="70">
    <citation type="journal article" date="2010" name="Plant J.">
        <title>PYR/PYL/RCAR family members are major in-vivo ABI1 protein phosphatase 2C-interacting proteins in Arabidopsis.</title>
        <authorList>
            <person name="Nishimura N."/>
            <person name="Sarkeshik A."/>
            <person name="Nito K."/>
            <person name="Park S.-Y."/>
            <person name="Wang A."/>
            <person name="Carvalho P.C."/>
            <person name="Lee S."/>
            <person name="Caddell D.F."/>
            <person name="Cutler S.R."/>
            <person name="Chory J."/>
            <person name="Yates J.R."/>
            <person name="Schroeder J.I."/>
        </authorList>
    </citation>
    <scope>INTERACTION WITH RPL12B; PYR1; PYL1; PYL4; PYL5; PYL6; PYL7; PYL8; PYL9; PYL10; SRK2E/OST1; SRK2D/SNRK2-2 AND SRK2I/SNRK2-3</scope>
</reference>
<reference key="71">
    <citation type="journal article" date="2010" name="Proc. Natl. Acad. Sci. U.S.A.">
        <title>Guard cell anion channel SLAC1 is regulated by CDPK protein kinases with distinct Ca2+ affinities.</title>
        <authorList>
            <person name="Geiger D."/>
            <person name="Scherzer S."/>
            <person name="Mumm P."/>
            <person name="Marten I."/>
            <person name="Ache P."/>
            <person name="Matschi S."/>
            <person name="Liese A."/>
            <person name="Wellmann C."/>
            <person name="Al-Rasheid K.A.S."/>
            <person name="Grill E."/>
            <person name="Romeis T."/>
            <person name="Hedrich R."/>
        </authorList>
    </citation>
    <scope>INTERACTION WITH CPK21 AND CPK23</scope>
</reference>
<reference key="72">
    <citation type="journal article" date="2011" name="Mol. Cell">
        <title>The molecular basis of ABA-independent inhibition of PP2Cs by a subclass of PYL proteins.</title>
        <authorList>
            <person name="Hao Q."/>
            <person name="Yin P."/>
            <person name="Li W."/>
            <person name="Wang L."/>
            <person name="Yan C."/>
            <person name="Lin Z."/>
            <person name="Wu J.Z."/>
            <person name="Wang J."/>
            <person name="Yan S.F."/>
            <person name="Yan N."/>
        </authorList>
    </citation>
    <scope>INTERACTION WITH PYL10</scope>
</reference>
<reference key="73">
    <citation type="journal article" date="2013" name="Cell Res.">
        <title>Molecular basis for the selective and ABA-independent inhibition of PP2CA by PYL13.</title>
        <authorList>
            <person name="Li W."/>
            <person name="Wang L."/>
            <person name="Sheng X."/>
            <person name="Yan C."/>
            <person name="Zhou R."/>
            <person name="Hang J."/>
            <person name="Yin P."/>
            <person name="Yan N."/>
        </authorList>
    </citation>
    <scope>INTERACTION WITH PYL13</scope>
</reference>
<reference key="74">
    <citation type="journal article" date="2013" name="Plant Cell">
        <title>ABI1 and PP2CA phosphatases are negative regulators of Snf1-related protein kinase1 signaling in Arabidopsis.</title>
        <authorList>
            <person name="Rodrigues A."/>
            <person name="Adamo M."/>
            <person name="Crozet P."/>
            <person name="Margalha L."/>
            <person name="Confraria A."/>
            <person name="Martinho C."/>
            <person name="Elias A."/>
            <person name="Rabissi A."/>
            <person name="Lumbreras V."/>
            <person name="Gonzalez-Guzman M."/>
            <person name="Antoni R."/>
            <person name="Rodriguez P.L."/>
            <person name="Baena-Gonzalez E."/>
        </authorList>
    </citation>
    <scope>INTERACTION WITH KIN10</scope>
    <scope>FUNCTION</scope>
</reference>
<reference key="75">
    <citation type="journal article" date="2015" name="Plant Cell Physiol.">
        <title>Arabidopsis ABA-activated kinase MAPKKK18 is regulated by protein phosphatase 2C ABI1 and the ubiquitin-proteasome pathway.</title>
        <authorList>
            <person name="Mitula F."/>
            <person name="Tajdel M."/>
            <person name="Ciesla A."/>
            <person name="Kasprowicz-Maluski A."/>
            <person name="Kulik A."/>
            <person name="Babula-Skowronska D."/>
            <person name="Michalak M."/>
            <person name="Dobrowolska G."/>
            <person name="Sadowski J."/>
            <person name="Ludwikow A."/>
        </authorList>
    </citation>
    <scope>FUNCTION</scope>
    <scope>INTERACTION WITH MAPKKK18</scope>
    <scope>DISRUPTION PHENOTYPE</scope>
    <source>
        <strain>cv. Columbia</strain>
    </source>
</reference>
<reference key="76">
    <citation type="journal article" date="2015" name="Plant Mol. Biol.">
        <title>An abscisic acid inducible Arabidopsis MAPKKK, MAPKKK18 regulates leaf senescence via its kinase activity.</title>
        <authorList>
            <person name="Matsuoka D."/>
            <person name="Yasufuku T."/>
            <person name="Furuya T."/>
            <person name="Nanmori T."/>
        </authorList>
    </citation>
    <scope>INDUCTION BY ABSCISIC ACID</scope>
    <source>
        <strain>cv. Columbia</strain>
    </source>
</reference>
<reference key="77">
    <citation type="journal article" date="2017" name="Plant Physiol.">
        <title>AIK1, a mitogen-activated protein kinase, modulates abscisic acid responses through the MKK5-MPK6 kinase cascade.</title>
        <authorList>
            <person name="Li K."/>
            <person name="Yang F."/>
            <person name="Zhang G."/>
            <person name="Song S."/>
            <person name="Li Y."/>
            <person name="Ren D."/>
            <person name="Miao Y."/>
            <person name="Song C.-P."/>
        </authorList>
    </citation>
    <scope>FUNCTION</scope>
</reference>
<reference key="78">
    <citation type="journal article" date="2018" name="Cell Discov.">
        <title>CARK1 mediates ABA signaling by phosphorylation of ABA receptors.</title>
        <authorList>
            <person name="Zhang L."/>
            <person name="Li X."/>
            <person name="Li D."/>
            <person name="Sun Y."/>
            <person name="Li Y."/>
            <person name="Luo Q."/>
            <person name="Liu Z."/>
            <person name="Wang J."/>
            <person name="Li X."/>
            <person name="Zhang H."/>
            <person name="Lou Z."/>
            <person name="Yang Y."/>
        </authorList>
    </citation>
    <scope>INTERACTION WITH PYL8/RCAR3</scope>
</reference>
<reference key="79">
    <citation type="journal article" date="2018" name="Front. Plant Sci.">
        <title>Mitogen-activated protein kinase cascades in plant hormone signaling.</title>
        <authorList>
            <person name="Jagodzik P."/>
            <person name="Tajdel-Zielinska M."/>
            <person name="Ciesla A."/>
            <person name="Marczak M."/>
            <person name="Ludwikow A."/>
        </authorList>
    </citation>
    <scope>REVIEW ON MITOGEN-ACTIVATED PROTEIN KINASE CASCADES</scope>
</reference>
<reference key="80">
    <citation type="journal article" date="2009" name="Nat. Struct. Mol. Biol.">
        <title>Structural insights into the mechanism of abscisic acid signaling by PYL proteins.</title>
        <authorList>
            <person name="Yin P."/>
            <person name="Fan H."/>
            <person name="Hao Q."/>
            <person name="Yuan X."/>
            <person name="Wu D."/>
            <person name="Pang Y."/>
            <person name="Yan C."/>
            <person name="Li W."/>
            <person name="Wang J."/>
            <person name="Yan N."/>
        </authorList>
    </citation>
    <scope>X-RAY CRYSTALLOGRAPHY (1.88 ANGSTROMS) OF 119-434 IN COMPLEX WITH MANGANESE; ABA AND PYL1</scope>
    <scope>INTERACTION WITH PYL2</scope>
</reference>
<reference key="81">
    <citation type="journal article" date="2009" name="Nature">
        <title>Structural basis of abscisic acid signalling.</title>
        <authorList>
            <person name="Miyazono K.-I."/>
            <person name="Miyakawa T."/>
            <person name="Sawano Y."/>
            <person name="Kubota K."/>
            <person name="Kang H.-J."/>
            <person name="Asano A."/>
            <person name="Miyauchi Y."/>
            <person name="Takahashi M."/>
            <person name="Zhi Y."/>
            <person name="Fujita Y."/>
            <person name="Yoshida T."/>
            <person name="Kodaira K.-S."/>
            <person name="Yamaguchi-Shinozaki K."/>
            <person name="Tanokura M."/>
        </authorList>
    </citation>
    <scope>X-RAY CRYSTALLOGRAPHY (2.1 ANGSTROMS) OF 125-429 IN COMPLEX WITH ABSCISIC ACID AND PYL1</scope>
    <scope>MUTAGENESIS OF GLU-142; THR-239; ILE-298; TRP-300; ARG-304; PHE-306; VAL-308 AND TYR-319</scope>
    <scope>INTERACTION WITH PYL1</scope>
</reference>
<reference key="82">
    <citation type="journal article" date="2010" name="Nat. Struct. Mol. Biol.">
        <title>Identification and mechanism of ABA receptor antagonism.</title>
        <authorList>
            <person name="Melcher K."/>
            <person name="Xu Y."/>
            <person name="Ng L.-M."/>
            <person name="Zhou X.E."/>
            <person name="Soon F.-F."/>
            <person name="Chinnusamy V."/>
            <person name="Suino-Powell K.M."/>
            <person name="Kovach A."/>
            <person name="Tham F.S."/>
            <person name="Cutler S.R."/>
            <person name="Li J."/>
            <person name="Yong E.-L."/>
            <person name="Zhu J.-K."/>
            <person name="Xu H.E."/>
        </authorList>
    </citation>
    <scope>X-RAY CRYSTALLOGRAPHY (2.15 ANGSTROMS) OF 117-434 IN COMPLEX WITH MAGNESIUM</scope>
</reference>
<dbReference type="EC" id="3.1.3.16" evidence="5 64 73"/>
<dbReference type="EMBL" id="U12856">
    <property type="protein sequence ID" value="AAA50237.1"/>
    <property type="molecule type" value="mRNA"/>
</dbReference>
<dbReference type="EMBL" id="X77116">
    <property type="protein sequence ID" value="CAA54383.1"/>
    <property type="molecule type" value="mRNA"/>
</dbReference>
<dbReference type="EMBL" id="X78886">
    <property type="protein sequence ID" value="CAA55484.1"/>
    <property type="molecule type" value="Genomic_DNA"/>
</dbReference>
<dbReference type="EMBL" id="AL049483">
    <property type="protein sequence ID" value="CAB39673.1"/>
    <property type="molecule type" value="Genomic_DNA"/>
</dbReference>
<dbReference type="EMBL" id="AL161564">
    <property type="protein sequence ID" value="CAB79463.1"/>
    <property type="molecule type" value="Genomic_DNA"/>
</dbReference>
<dbReference type="EMBL" id="CP002687">
    <property type="protein sequence ID" value="AEE85155.1"/>
    <property type="molecule type" value="Genomic_DNA"/>
</dbReference>
<dbReference type="EMBL" id="AY035073">
    <property type="protein sequence ID" value="AAK59578.1"/>
    <property type="molecule type" value="mRNA"/>
</dbReference>
<dbReference type="EMBL" id="AY142623">
    <property type="protein sequence ID" value="AAN13081.1"/>
    <property type="molecule type" value="mRNA"/>
</dbReference>
<dbReference type="EMBL" id="AK226529">
    <property type="protein sequence ID" value="BAE98668.1"/>
    <property type="molecule type" value="mRNA"/>
</dbReference>
<dbReference type="PIR" id="T04263">
    <property type="entry name" value="T04263"/>
</dbReference>
<dbReference type="RefSeq" id="NP_194338.1">
    <property type="nucleotide sequence ID" value="NM_118741.3"/>
</dbReference>
<dbReference type="PDB" id="3JRQ">
    <property type="method" value="X-ray"/>
    <property type="resolution" value="2.10 A"/>
    <property type="chains" value="A=125-429"/>
</dbReference>
<dbReference type="PDB" id="3KDJ">
    <property type="method" value="X-ray"/>
    <property type="resolution" value="1.88 A"/>
    <property type="chains" value="B=119-434"/>
</dbReference>
<dbReference type="PDB" id="3NMN">
    <property type="method" value="X-ray"/>
    <property type="resolution" value="2.15 A"/>
    <property type="chains" value="B/D=117-434"/>
</dbReference>
<dbReference type="PDBsum" id="3JRQ"/>
<dbReference type="PDBsum" id="3KDJ"/>
<dbReference type="PDBsum" id="3NMN"/>
<dbReference type="SMR" id="P49597"/>
<dbReference type="BioGRID" id="14001">
    <property type="interactions" value="65"/>
</dbReference>
<dbReference type="DIP" id="DIP-36706N"/>
<dbReference type="FunCoup" id="P49597">
    <property type="interactions" value="378"/>
</dbReference>
<dbReference type="IntAct" id="P49597">
    <property type="interactions" value="34"/>
</dbReference>
<dbReference type="MINT" id="P49597"/>
<dbReference type="STRING" id="3702.P49597"/>
<dbReference type="iPTMnet" id="P49597"/>
<dbReference type="PaxDb" id="3702-AT4G26080.1"/>
<dbReference type="ProteomicsDB" id="248804"/>
<dbReference type="EnsemblPlants" id="AT4G26080.1">
    <property type="protein sequence ID" value="AT4G26080.1"/>
    <property type="gene ID" value="AT4G26080"/>
</dbReference>
<dbReference type="GeneID" id="828714"/>
<dbReference type="Gramene" id="AT4G26080.1">
    <property type="protein sequence ID" value="AT4G26080.1"/>
    <property type="gene ID" value="AT4G26080"/>
</dbReference>
<dbReference type="KEGG" id="ath:AT4G26080"/>
<dbReference type="Araport" id="AT4G26080"/>
<dbReference type="TAIR" id="AT4G26080">
    <property type="gene designation" value="ABI1"/>
</dbReference>
<dbReference type="eggNOG" id="KOG0698">
    <property type="taxonomic scope" value="Eukaryota"/>
</dbReference>
<dbReference type="HOGENOM" id="CLU_013173_20_4_1"/>
<dbReference type="InParanoid" id="P49597"/>
<dbReference type="OMA" id="FFDIPLW"/>
<dbReference type="PhylomeDB" id="P49597"/>
<dbReference type="BRENDA" id="3.1.3.16">
    <property type="organism ID" value="399"/>
</dbReference>
<dbReference type="EvolutionaryTrace" id="P49597"/>
<dbReference type="PRO" id="PR:P49597"/>
<dbReference type="Proteomes" id="UP000006548">
    <property type="component" value="Chromosome 4"/>
</dbReference>
<dbReference type="ExpressionAtlas" id="P49597">
    <property type="expression patterns" value="baseline and differential"/>
</dbReference>
<dbReference type="GO" id="GO:0005737">
    <property type="term" value="C:cytoplasm"/>
    <property type="evidence" value="ECO:0007669"/>
    <property type="project" value="UniProtKB-SubCell"/>
</dbReference>
<dbReference type="GO" id="GO:0005634">
    <property type="term" value="C:nucleus"/>
    <property type="evidence" value="ECO:0000314"/>
    <property type="project" value="TAIR"/>
</dbReference>
<dbReference type="GO" id="GO:0005886">
    <property type="term" value="C:plasma membrane"/>
    <property type="evidence" value="ECO:0007669"/>
    <property type="project" value="UniProtKB-SubCell"/>
</dbReference>
<dbReference type="GO" id="GO:0019900">
    <property type="term" value="F:kinase binding"/>
    <property type="evidence" value="ECO:0000353"/>
    <property type="project" value="UniProtKB"/>
</dbReference>
<dbReference type="GO" id="GO:0046872">
    <property type="term" value="F:metal ion binding"/>
    <property type="evidence" value="ECO:0007669"/>
    <property type="project" value="UniProtKB-KW"/>
</dbReference>
<dbReference type="GO" id="GO:0016791">
    <property type="term" value="F:phosphatase activity"/>
    <property type="evidence" value="ECO:0000314"/>
    <property type="project" value="UniProtKB"/>
</dbReference>
<dbReference type="GO" id="GO:0004721">
    <property type="term" value="F:phosphoprotein phosphatase activity"/>
    <property type="evidence" value="ECO:0000314"/>
    <property type="project" value="CACAO"/>
</dbReference>
<dbReference type="GO" id="GO:0019901">
    <property type="term" value="F:protein kinase binding"/>
    <property type="evidence" value="ECO:0000353"/>
    <property type="project" value="UniProtKB"/>
</dbReference>
<dbReference type="GO" id="GO:0004722">
    <property type="term" value="F:protein serine/threonine phosphatase activity"/>
    <property type="evidence" value="ECO:0000314"/>
    <property type="project" value="TAIR"/>
</dbReference>
<dbReference type="GO" id="GO:0009738">
    <property type="term" value="P:abscisic acid-activated signaling pathway"/>
    <property type="evidence" value="ECO:0007669"/>
    <property type="project" value="UniProtKB-KW"/>
</dbReference>
<dbReference type="GO" id="GO:0009788">
    <property type="term" value="P:negative regulation of abscisic acid-activated signaling pathway"/>
    <property type="evidence" value="ECO:0000315"/>
    <property type="project" value="UniProtKB"/>
</dbReference>
<dbReference type="GO" id="GO:0006470">
    <property type="term" value="P:protein dephosphorylation"/>
    <property type="evidence" value="ECO:0000314"/>
    <property type="project" value="CACAO"/>
</dbReference>
<dbReference type="GO" id="GO:0009787">
    <property type="term" value="P:regulation of abscisic acid-activated signaling pathway"/>
    <property type="evidence" value="ECO:0000315"/>
    <property type="project" value="TAIR"/>
</dbReference>
<dbReference type="GO" id="GO:0010119">
    <property type="term" value="P:regulation of stomatal movement"/>
    <property type="evidence" value="ECO:0000315"/>
    <property type="project" value="TAIR"/>
</dbReference>
<dbReference type="GO" id="GO:0009737">
    <property type="term" value="P:response to abscisic acid"/>
    <property type="evidence" value="ECO:0000315"/>
    <property type="project" value="TAIR"/>
</dbReference>
<dbReference type="GO" id="GO:0009409">
    <property type="term" value="P:response to cold"/>
    <property type="evidence" value="ECO:0000315"/>
    <property type="project" value="TAIR"/>
</dbReference>
<dbReference type="GO" id="GO:0009408">
    <property type="term" value="P:response to heat"/>
    <property type="evidence" value="ECO:0000315"/>
    <property type="project" value="TAIR"/>
</dbReference>
<dbReference type="CDD" id="cd00143">
    <property type="entry name" value="PP2Cc"/>
    <property type="match status" value="1"/>
</dbReference>
<dbReference type="FunFam" id="3.60.40.10:FF:000025">
    <property type="entry name" value="Protein phosphatase 2C 16"/>
    <property type="match status" value="1"/>
</dbReference>
<dbReference type="Gene3D" id="3.60.40.10">
    <property type="entry name" value="PPM-type phosphatase domain"/>
    <property type="match status" value="1"/>
</dbReference>
<dbReference type="InterPro" id="IPR015655">
    <property type="entry name" value="PP2C"/>
</dbReference>
<dbReference type="InterPro" id="IPR000222">
    <property type="entry name" value="PP2C_BS"/>
</dbReference>
<dbReference type="InterPro" id="IPR036457">
    <property type="entry name" value="PPM-type-like_dom_sf"/>
</dbReference>
<dbReference type="InterPro" id="IPR001932">
    <property type="entry name" value="PPM-type_phosphatase-like_dom"/>
</dbReference>
<dbReference type="PANTHER" id="PTHR47992">
    <property type="entry name" value="PROTEIN PHOSPHATASE"/>
    <property type="match status" value="1"/>
</dbReference>
<dbReference type="Pfam" id="PF00481">
    <property type="entry name" value="PP2C"/>
    <property type="match status" value="1"/>
</dbReference>
<dbReference type="SMART" id="SM00332">
    <property type="entry name" value="PP2Cc"/>
    <property type="match status" value="1"/>
</dbReference>
<dbReference type="SUPFAM" id="SSF81606">
    <property type="entry name" value="PP2C-like"/>
    <property type="match status" value="1"/>
</dbReference>
<dbReference type="PROSITE" id="PS01032">
    <property type="entry name" value="PPM_1"/>
    <property type="match status" value="1"/>
</dbReference>
<dbReference type="PROSITE" id="PS51746">
    <property type="entry name" value="PPM_2"/>
    <property type="match status" value="1"/>
</dbReference>
<comment type="function">
    <text evidence="3 4 5 6 7 8 9 11 12 13 14 15 16 17 18 19 20 21 22 23 24 26 27 28 29 30 32 33 34 35 36 38 40 42 43 51 56 57 58 60 62 63 64 65 66 67 68 69 70 71 72 74">Key component and repressor of the abscisic acid (ABA) signaling pathway that regulates numerous ABA responses, such as stomatal closure, osmotic water permeability of the plasma membrane (Pos), drought-induced resistance and rhizogenesis, response to glucose, high light stress, seed germination and inhibition of vegetative growth. During the stomatal closure regulation, modulates the inward calcium-channel permeability as well as the actin reorganization in guard cells in response to ABA. Involved in the resistance to the bacterial pathogen Pseudomonas syringae pv. tomato. Controls negatively fibrillin expression that is involved in mediating ABA-induced photoprotection. May be involved in ABA content regulation. Plays a role in the Pro accumulation in response to reduced water availability (low water potential). Required for the ABA negative regulation of the ethylene-induced hyponastic growth. Involved in acquired thermotolerance of root growth and seedling survival. Activates/represses SRK2E/OST1 in response to ABA-dependent stimuli, especially in stomata closure regulation involving SLAC1. Represses MAPKKK18 activity and promotes MAPKKK18 degradation by the proteasome pathway upon abscisic acid (ABA) treatment (PubMed:26443375). Represses KIN10 activity by the specific dephosphorylation of its T-loop Thr-198, leading to a poststress inactivation of SnRK1 signaling (PubMed:24179127). Restricts MAPKKK20 activity by dephosphorylation (PubMed:27913741).</text>
</comment>
<comment type="catalytic activity">
    <reaction evidence="5 64 73">
        <text>O-phospho-L-seryl-[protein] + H2O = L-seryl-[protein] + phosphate</text>
        <dbReference type="Rhea" id="RHEA:20629"/>
        <dbReference type="Rhea" id="RHEA-COMP:9863"/>
        <dbReference type="Rhea" id="RHEA-COMP:11604"/>
        <dbReference type="ChEBI" id="CHEBI:15377"/>
        <dbReference type="ChEBI" id="CHEBI:29999"/>
        <dbReference type="ChEBI" id="CHEBI:43474"/>
        <dbReference type="ChEBI" id="CHEBI:83421"/>
        <dbReference type="EC" id="3.1.3.16"/>
    </reaction>
</comment>
<comment type="catalytic activity">
    <reaction evidence="5 64 73">
        <text>O-phospho-L-threonyl-[protein] + H2O = L-threonyl-[protein] + phosphate</text>
        <dbReference type="Rhea" id="RHEA:47004"/>
        <dbReference type="Rhea" id="RHEA-COMP:11060"/>
        <dbReference type="Rhea" id="RHEA-COMP:11605"/>
        <dbReference type="ChEBI" id="CHEBI:15377"/>
        <dbReference type="ChEBI" id="CHEBI:30013"/>
        <dbReference type="ChEBI" id="CHEBI:43474"/>
        <dbReference type="ChEBI" id="CHEBI:61977"/>
        <dbReference type="EC" id="3.1.3.16"/>
    </reaction>
</comment>
<comment type="cofactor">
    <cofactor evidence="53 64 73">
        <name>Mg(2+)</name>
        <dbReference type="ChEBI" id="CHEBI:18420"/>
    </cofactor>
    <cofactor evidence="49 64 73">
        <name>Mn(2+)</name>
        <dbReference type="ChEBI" id="CHEBI:29035"/>
    </cofactor>
    <text evidence="49 53 64 73">Binds 2 magnesium or manganese ions per subunit.</text>
</comment>
<comment type="activity regulation">
    <text evidence="27 34 44 46">Phosphatase activity repressed by oxidized GPX3 and phosphatidic acid (PA). PA is produced by PLD alpha 1 in response to ABA. Repressed by PYR/PYL/RCAR ABA receptors in an ABA-dependent manner.</text>
</comment>
<comment type="biophysicochemical properties">
    <phDependence>
        <text evidence="73">Optimum pH is 8.</text>
    </phDependence>
</comment>
<comment type="subunit">
    <text evidence="15 16 27 32 34 37 39 44 45 46 47 48 49 50 51 52 54 55 56 57 59">Interacts with SPK1, ATHB-6, CIPK15/PKS3, GPX3, SRK2E/OST1, SRK2D, SRK2I, SCAR1, SCAR2, SCAR3 and SCARL. Binds to the PA released by the phospholipase D alpha 1 (PLDALPHA1) in response to ABA during the stomatal closure regulation. Interacts with ABA-bounded PYR1, PYL1, PYL2, PYL3, PYL4, PYL5, PYL6, PYL7, PYL8, PYL9, PYL10, and with free PYL2, PYL3, PYL4 and PYL13. Binds to RPL12B, CPK21 and CPK23. Binds to MAPKKK18 (PubMed:26443375). Interacts with KIN10 (PubMed:24179127). Interacts with phosphorylated PYL8/RCAR3 (PubMed:29928509).</text>
</comment>
<comment type="interaction">
    <interactant intactId="EBI-782526">
        <id>P49597</id>
    </interactant>
    <interactant intactId="EBI-2363104">
        <id>Q8VZS8</id>
        <label>PYL1</label>
    </interactant>
    <organismsDiffer>false</organismsDiffer>
    <experiments>13</experiments>
</comment>
<comment type="interaction">
    <interactant intactId="EBI-782526">
        <id>P49597</id>
    </interactant>
    <interactant intactId="EBI-2363213">
        <id>Q8H1R0</id>
        <label>PYL10</label>
    </interactant>
    <organismsDiffer>false</organismsDiffer>
    <experiments>7</experiments>
</comment>
<comment type="interaction">
    <interactant intactId="EBI-782526">
        <id>P49597</id>
    </interactant>
    <interactant intactId="EBI-2363233">
        <id>Q9FJ50</id>
        <label>PYL11</label>
    </interactant>
    <organismsDiffer>false</organismsDiffer>
    <experiments>3</experiments>
</comment>
<comment type="interaction">
    <interactant intactId="EBI-782526">
        <id>P49597</id>
    </interactant>
    <interactant intactId="EBI-2363244">
        <id>Q9FJ49</id>
        <label>PYL12</label>
    </interactant>
    <organismsDiffer>false</organismsDiffer>
    <experiments>3</experiments>
</comment>
<comment type="interaction">
    <interactant intactId="EBI-782526">
        <id>P49597</id>
    </interactant>
    <interactant intactId="EBI-25515027">
        <id>Q9SN51</id>
        <label>PYL13</label>
    </interactant>
    <organismsDiffer>false</organismsDiffer>
    <experiments>3</experiments>
</comment>
<comment type="interaction">
    <interactant intactId="EBI-782526">
        <id>P49597</id>
    </interactant>
    <interactant intactId="EBI-2363125">
        <id>O80992</id>
        <label>PYL2</label>
    </interactant>
    <organismsDiffer>false</organismsDiffer>
    <experiments>6</experiments>
</comment>
<comment type="interaction">
    <interactant intactId="EBI-782526">
        <id>P49597</id>
    </interactant>
    <interactant intactId="EBI-2363144">
        <id>Q9SSM7</id>
        <label>PYL3</label>
    </interactant>
    <organismsDiffer>false</organismsDiffer>
    <experiments>5</experiments>
</comment>
<comment type="interaction">
    <interactant intactId="EBI-782526">
        <id>P49597</id>
    </interactant>
    <interactant intactId="EBI-2349683">
        <id>O80920</id>
        <label>PYL4</label>
    </interactant>
    <organismsDiffer>false</organismsDiffer>
    <experiments>9</experiments>
</comment>
<comment type="interaction">
    <interactant intactId="EBI-782526">
        <id>P49597</id>
    </interactant>
    <interactant intactId="EBI-2363181">
        <id>Q9FLB1</id>
        <label>PYL5</label>
    </interactant>
    <organismsDiffer>false</organismsDiffer>
    <experiments>12</experiments>
</comment>
<comment type="interaction">
    <interactant intactId="EBI-782526">
        <id>P49597</id>
    </interactant>
    <interactant intactId="EBI-2363192">
        <id>Q8S8E3</id>
        <label>PYL6</label>
    </interactant>
    <organismsDiffer>false</organismsDiffer>
    <experiments>9</experiments>
</comment>
<comment type="interaction">
    <interactant intactId="EBI-782526">
        <id>P49597</id>
    </interactant>
    <interactant intactId="EBI-2363203">
        <id>Q1ECF1</id>
        <label>PYL7</label>
    </interactant>
    <organismsDiffer>false</organismsDiffer>
    <experiments>5</experiments>
</comment>
<comment type="interaction">
    <interactant intactId="EBI-782526">
        <id>P49597</id>
    </interactant>
    <interactant intactId="EBI-2429535">
        <id>Q9FGM1</id>
        <label>PYL8</label>
    </interactant>
    <organismsDiffer>false</organismsDiffer>
    <experiments>7</experiments>
</comment>
<comment type="interaction">
    <interactant intactId="EBI-782526">
        <id>P49597</id>
    </interactant>
    <interactant intactId="EBI-2349513">
        <id>Q84MC7</id>
        <label>PYL9</label>
    </interactant>
    <organismsDiffer>false</organismsDiffer>
    <experiments>14</experiments>
</comment>
<comment type="interaction">
    <interactant intactId="EBI-782526">
        <id>P49597</id>
    </interactant>
    <interactant intactId="EBI-2349590">
        <id>O49686</id>
        <label>PYR1</label>
    </interactant>
    <organismsDiffer>false</organismsDiffer>
    <experiments>12</experiments>
</comment>
<comment type="interaction">
    <interactant intactId="EBI-782526">
        <id>P49597</id>
    </interactant>
    <interactant intactId="EBI-4425188">
        <id>Q93ZY2</id>
        <label>ROPGEF1</label>
    </interactant>
    <organismsDiffer>false</organismsDiffer>
    <experiments>4</experiments>
</comment>
<comment type="interaction">
    <interactant intactId="EBI-782526">
        <id>P49597</id>
    </interactant>
    <interactant intactId="EBI-2363308">
        <id>Q39192</id>
        <label>SRK2D</label>
    </interactant>
    <organismsDiffer>false</organismsDiffer>
    <experiments>7</experiments>
</comment>
<comment type="interaction">
    <interactant intactId="EBI-782526">
        <id>P49597</id>
    </interactant>
    <interactant intactId="EBI-782514">
        <id>Q940H6</id>
        <label>SRK2E</label>
    </interactant>
    <organismsDiffer>false</organismsDiffer>
    <experiments>15</experiments>
</comment>
<comment type="interaction">
    <interactant intactId="EBI-782526">
        <id>P49597</id>
    </interactant>
    <interactant intactId="EBI-2620383">
        <id>Q39193</id>
        <label>SRK2I</label>
    </interactant>
    <organismsDiffer>false</organismsDiffer>
    <experiments>8</experiments>
</comment>
<comment type="interaction">
    <interactant intactId="EBI-782526">
        <id>P49597</id>
    </interactant>
    <interactant intactId="EBI-1388539">
        <id>Q9LMA8</id>
        <label>TIFY10A</label>
    </interactant>
    <organismsDiffer>false</organismsDiffer>
    <experiments>3</experiments>
</comment>
<comment type="subcellular location">
    <subcellularLocation>
        <location>Nucleus</location>
    </subcellularLocation>
    <subcellularLocation>
        <location>Cytoplasm</location>
    </subcellularLocation>
    <subcellularLocation>
        <location>Cell membrane</location>
        <topology>Peripheral membrane protein</topology>
    </subcellularLocation>
    <text>Associated to the plasma membrane when in complex with PA, subsequently to ABA signaling.</text>
</comment>
<comment type="tissue specificity">
    <text evidence="31 42">Expressed in seeds and seedlings. In roots, confined to lateral root caps and columella cells.</text>
</comment>
<comment type="induction">
    <text evidence="10 25 31 37 38 41">Repressed by MYB44. Induced by low temperature, drought, high salt, abscisic acid (ABA) and ethylene.</text>
</comment>
<comment type="domain">
    <text evidence="1">The 'lock' site stabilizes the complex made of PP2C, ABA and PYR/PYL/RCAR receptor by keeping receptor 'gate' and 'latch' loops in closed positions.</text>
</comment>
<comment type="disruption phenotype">
    <text evidence="57">In abi1td, enhanced induction of MKKK18 activity after 90 minutes of abscisic acid (ABA) treatment and reduced degradation of MKKK18 by the proteasome.</text>
</comment>
<comment type="miscellaneous">
    <text>Enhanced ABA signaling repressor activity by the proteasomal inhibitor MG132 accompanied by a cytoplasmic localization.</text>
</comment>
<comment type="miscellaneous">
    <text>Plants insensitive to ABA (abi1-1) are more resistant to P.syringae.</text>
</comment>
<comment type="similarity">
    <text evidence="77">Belongs to the PP2C family.</text>
</comment>
<protein>
    <recommendedName>
        <fullName evidence="75">Protein phosphatase 2C 56</fullName>
        <shortName evidence="75">AtPP2C56</shortName>
        <ecNumber evidence="5 64 73">3.1.3.16</ecNumber>
    </recommendedName>
    <alternativeName>
        <fullName evidence="76">Protein ABSCISIC ACID-INSENSITIVE 1</fullName>
    </alternativeName>
    <alternativeName>
        <fullName evidence="76">Protein phosphatase 2C ABI1</fullName>
        <shortName evidence="76">PP2C ABI1</shortName>
    </alternativeName>
</protein>
<sequence>MEEVSPAIAGPFRPFSETQMDFTGIRLGKGYCNNQYSNQDSENGDLMVSLPETSSCSVSGSHGSESRKVLISRINSPNLNMKESAAADIVVVDISAGDEINGSDITSEKKMISRTESRSLFEFKSVPLYGFTSICGRRPEMEDAVSTIPRFLQSSSGSMLDGRFDPQSAAHFFGVYDGHGGSQVANYCRERMHLALAEEIAKEKPMLCDGDTWLEKWKKALFNSFLRVDSEIESVAPETVGSTSVVAVVFPSHIFVANCGDSRAVLCRGKTALPLSVDHKPDREDEAARIEAAGGKVIQWNGARVFGVLAMSRSIGDRYLKPSIIPDPEVTAVKRVKEDDCLILASDGVWDVMTDEEACEMARKRILLWHKKNAVAGDASLLADERRKEGKDPAAMSAAEYLSKLAIQRGSKDNISVVVVDLKPRRKLKSKPLN</sequence>
<name>P2C56_ARATH</name>
<proteinExistence type="evidence at protein level"/>